<comment type="function">
    <text evidence="2">The replicase polyprotein of coronaviruses is a multifunctional protein: it contains the activities necessary for the transcription of negative stranded RNA, leader RNA, subgenomic mRNAs and progeny virion RNA as well as proteinases responsible for the cleavage of the polyprotein into functional products.</text>
</comment>
<comment type="function">
    <molecule>Host translation inhibitor nsp1</molecule>
    <text evidence="2">Inhibits host translation by interacting with the 40S ribosomal subunit. The nsp1-40S ribosome complex further induces an endonucleolytic cleavage near the 5'UTR of host mRNAs, targeting them for degradation. Viral mRNAs are not susceptible to nsp1-mediated endonucleolytic RNA cleavage thanks to the presence of a 5'-end leader sequence and are therefore protected from degradation. By suppressing host gene expression, nsp1 facilitates efficient viral gene expression in infected cells and evasion from host immune response.</text>
</comment>
<comment type="function">
    <molecule>Non-structural protein 2</molecule>
    <text evidence="2">May play a role in the modulation of host cell survival signaling pathway by interacting with host PHB and PHB2. Indeed, these two proteins play a role in maintaining the functional integrity of the mitochondria and protecting cells from various stresses.</text>
</comment>
<comment type="function">
    <molecule>Papain-like proteinase nsp3</molecule>
    <text evidence="2">Responsible for the cleavages located at the N-terminus of the replicase polyprotein. In addition, PL-PRO possesses a deubiquitinating/deISGylating activity and processes both 'Lys-48'- and 'Lys-63'-linked polyubiquitin chains from cellular substrates. Participates together with nsp4 in the assembly of virally-induced cytoplasmic double-membrane vesicles necessary for viral replication. Antagonizes innate immune induction of type I interferon by blocking the phosphorylation, dimerization and subsequent nuclear translocation of host IRF3. Also prevents host NF-kappa-B signaling.</text>
</comment>
<comment type="function">
    <molecule>Non-structural protein 4</molecule>
    <text evidence="2">Participates in the assembly of virally-induced cytoplasmic double-membrane vesicles necessary for viral replication.</text>
</comment>
<comment type="function">
    <molecule>3C-like proteinase nsp5</molecule>
    <text evidence="2 9">Cleaves the C-terminus of replicase polyprotein at 11 sites. Recognizes substrates containing the core sequence [ILMVF]-Q-|-[SGACN]. Also able to bind an ADP-ribose-1''-phosphate (ADRP).</text>
</comment>
<comment type="function">
    <molecule>Non-structural protein 6</molecule>
    <text evidence="2">Plays a role in the initial induction of autophagosomes from host endoplasmic reticulum. Later, limits the expansion of these phagosomes that are no longer able to deliver viral components to lysosomes.</text>
</comment>
<comment type="function">
    <molecule>Non-structural protein 7</molecule>
    <text evidence="2">Forms a hexadecamer with nsp8 (8 subunits of each) that may participate in viral replication by acting as a primase. Alternatively, may synthesize substantially longer products than oligonucleotide primers.</text>
</comment>
<comment type="function">
    <molecule>Non-structural protein 8</molecule>
    <text evidence="2">Forms a hexadecamer with nsp7 (8 subunits of each) that may participate in viral replication by acting as a primase. Alternatively, may synthesize substantially longer products than oligonucleotide primers.</text>
</comment>
<comment type="function">
    <molecule>Viral protein genome-linked nsp9</molecule>
    <text evidence="3">Forms a primer, NSP9-pU, which is utilized by the polymerase for the initiation of RNA chains. Interacts with ribosome signal recognition particle RNA (SRP). Together with NSP8, suppress protein integration into the cell membrane, thereby disrupting host immune defenses.</text>
</comment>
<comment type="function">
    <molecule>Non-structural protein 10</molecule>
    <text evidence="2">Plays a pivotal role in viral transcription by stimulating both nsp14 3'-5' exoribonuclease and nsp16 2'-O-methyltransferase activities. Therefore plays an essential role in viral mRNAs cap methylation.</text>
</comment>
<comment type="function">
    <molecule>RNA-directed RNA polymerase nsp12</molecule>
    <text evidence="3">RNA-directed RNA polymerase that catalyzes the transcription of viral genomic and subgenomic RNAs. Acts in complex with nsp7 and nsp8 to transcribe both the minus and positive strands of genomic RNA. The kinase-like NiRAN domain of NSP12 attaches one or more nucleotides to the amino terminus of NSP9, forming a covalent RNA-protein intermediate that serves as transcription/replication primer. Subgenomic RNAs (sgRNAs) are formed by discontinuous transcription: The polymerase has the ability to pause at transcription-regulating sequences (TRS) and jump to the leader TRS, resulting in a major deletion. This creates a series of subgenomic RNAs that are replicated, transcribed and translated. In addition, Nsp12 is a subunit of the viral RNA capping enzyme that catalyzes the RNA guanylyltransferase reaction for genomic and sub-genomic RNAs. Subsequently, the NiRAN domain transfers RNA to GDP, and forms the core cap structure GpppA-RNA.</text>
</comment>
<comment type="function">
    <molecule>Helicase nsp13</molecule>
    <text evidence="2">Multi-functional protein with a zinc-binding domain in N-terminus displaying RNA and DNA duplex-unwinding activities with 5' to 3' polarity. Activity of helicase is dependent on magnesium.</text>
</comment>
<comment type="function">
    <molecule>Guanine-N7 methyltransferase nsp14</molecule>
    <text evidence="2">Plays a role in viral RNA synthesis through two distinct activities. The N7-guanine methyltransferase activity plays a role in the formation of the cap structure GpppA-RNA. The proofreading exoribonuclease reduces the sensitivity of the virus to RNA mutagens during replication. This activity acts on both ssRNA and dsRNA in a 3'-5' direction.</text>
</comment>
<comment type="function">
    <molecule>Uridylate-specific endoribonuclease nsp15</molecule>
    <text evidence="2">Plays a role in viral transcription/replication and prevents the simultaneous activation of host cell dsRNA sensors, such as MDA5/IFIH1, OAS, and PKR (By similarity). Acts by degrading the 5'-polyuridines generated during replication of the poly(A) region of viral genomic and subgenomic RNAs. Catalyzes a two-step reaction in which a 2'3'-cyclic phosphate (2'3'-cP) is first generated by 2'-O transesterification, which is then hydrolyzed to a 3'-phosphate (3'-P) (By similarity). If not degraded, poly(U) RNA would hybridize with poly(A) RNA tails and activate host dsRNA sensors (By similarity).</text>
</comment>
<comment type="function">
    <text evidence="2">2'-O-methyltransferase: Methyltransferase that mediates mRNA cap 2'-O-ribose methylation to the 5'-cap structure of viral mRNAs. N7-methyl guanosine cap is a prerequisite for binding of nsp16. Therefore plays an essential role in viral mRNAs cap methylation which is essential to evade immune system.</text>
</comment>
<comment type="catalytic activity">
    <molecule>RNA-directed RNA polymerase nsp12</molecule>
    <reaction evidence="8">
        <text>RNA(n) + a ribonucleoside 5'-triphosphate = RNA(n+1) + diphosphate</text>
        <dbReference type="Rhea" id="RHEA:21248"/>
        <dbReference type="Rhea" id="RHEA-COMP:14527"/>
        <dbReference type="Rhea" id="RHEA-COMP:17342"/>
        <dbReference type="ChEBI" id="CHEBI:33019"/>
        <dbReference type="ChEBI" id="CHEBI:61557"/>
        <dbReference type="ChEBI" id="CHEBI:140395"/>
        <dbReference type="EC" id="2.7.7.48"/>
    </reaction>
</comment>
<comment type="catalytic activity">
    <molecule>Helicase nsp13</molecule>
    <reaction>
        <text>ATP + H2O = ADP + phosphate + H(+)</text>
        <dbReference type="Rhea" id="RHEA:13065"/>
        <dbReference type="ChEBI" id="CHEBI:15377"/>
        <dbReference type="ChEBI" id="CHEBI:15378"/>
        <dbReference type="ChEBI" id="CHEBI:30616"/>
        <dbReference type="ChEBI" id="CHEBI:43474"/>
        <dbReference type="ChEBI" id="CHEBI:456216"/>
        <dbReference type="EC" id="3.6.4.12"/>
    </reaction>
</comment>
<comment type="catalytic activity">
    <molecule>Helicase nsp13</molecule>
    <reaction>
        <text>ATP + H2O = ADP + phosphate + H(+)</text>
        <dbReference type="Rhea" id="RHEA:13065"/>
        <dbReference type="ChEBI" id="CHEBI:15377"/>
        <dbReference type="ChEBI" id="CHEBI:15378"/>
        <dbReference type="ChEBI" id="CHEBI:30616"/>
        <dbReference type="ChEBI" id="CHEBI:43474"/>
        <dbReference type="ChEBI" id="CHEBI:456216"/>
        <dbReference type="EC" id="3.6.4.13"/>
    </reaction>
</comment>
<comment type="catalytic activity">
    <molecule>Papain-like proteinase nsp3</molecule>
    <reaction>
        <text>Thiol-dependent hydrolysis of ester, thioester, amide, peptide and isopeptide bonds formed by the C-terminal Gly of ubiquitin (a 76-residue protein attached to proteins as an intracellular targeting signal).</text>
        <dbReference type="EC" id="3.4.19.12"/>
    </reaction>
</comment>
<comment type="catalytic activity">
    <molecule>2'-O-methyl transferase nsp16</molecule>
    <reaction evidence="2">
        <text>a 5'-end (N(7)-methyl 5'-triphosphoguanosine)-ribonucleoside in mRNA + S-adenosyl-L-methionine = a 5'-end (N(7)-methyl 5'-triphosphoguanosine)-(2'-O-methyl-ribonucleoside) in mRNA + S-adenosyl-L-homocysteine + H(+)</text>
        <dbReference type="Rhea" id="RHEA:67020"/>
        <dbReference type="Rhea" id="RHEA-COMP:17167"/>
        <dbReference type="Rhea" id="RHEA-COMP:17168"/>
        <dbReference type="ChEBI" id="CHEBI:15378"/>
        <dbReference type="ChEBI" id="CHEBI:57856"/>
        <dbReference type="ChEBI" id="CHEBI:59789"/>
        <dbReference type="ChEBI" id="CHEBI:156461"/>
        <dbReference type="ChEBI" id="CHEBI:167609"/>
        <dbReference type="EC" id="2.1.1.57"/>
    </reaction>
</comment>
<comment type="catalytic activity">
    <molecule>Uridylate-specific endoribonuclease nsp15</molecule>
    <reaction evidence="2">
        <text>uridylyl-uridylyl-ribonucleotide-RNA = a 3'-end uridylyl-2',3'-cyclophospho-uridine-RNA + a 5'-end dephospho-ribonucleoside-RNA</text>
        <dbReference type="Rhea" id="RHEA:67732"/>
        <dbReference type="Rhea" id="RHEA-COMP:13936"/>
        <dbReference type="Rhea" id="RHEA-COMP:17334"/>
        <dbReference type="Rhea" id="RHEA-COMP:17335"/>
        <dbReference type="ChEBI" id="CHEBI:138284"/>
        <dbReference type="ChEBI" id="CHEBI:173079"/>
        <dbReference type="ChEBI" id="CHEBI:173080"/>
    </reaction>
</comment>
<comment type="catalytic activity">
    <molecule>RNA-directed RNA polymerase nsp12</molecule>
    <reaction evidence="3">
        <text>a 5'-end diphospho-ribonucleoside in mRNA + GTP + H(+) = a 5'-end (5'-triphosphoguanosine)-ribonucleoside in mRNA + diphosphate</text>
        <dbReference type="Rhea" id="RHEA:67012"/>
        <dbReference type="Rhea" id="RHEA-COMP:17165"/>
        <dbReference type="Rhea" id="RHEA-COMP:17166"/>
        <dbReference type="ChEBI" id="CHEBI:15378"/>
        <dbReference type="ChEBI" id="CHEBI:33019"/>
        <dbReference type="ChEBI" id="CHEBI:37565"/>
        <dbReference type="ChEBI" id="CHEBI:167616"/>
        <dbReference type="ChEBI" id="CHEBI:167617"/>
        <dbReference type="EC" id="2.7.7.50"/>
    </reaction>
    <physiologicalReaction direction="left-to-right" evidence="3">
        <dbReference type="Rhea" id="RHEA:67013"/>
    </physiologicalReaction>
</comment>
<comment type="catalytic activity">
    <molecule>Guanine-N7 methyltransferase nsp14</molecule>
    <reaction evidence="2">
        <text>a 5'-end (5'-triphosphoguanosine)-ribonucleoside in mRNA + S-adenosyl-L-methionine = a 5'-end (N(7)-methyl 5'-triphosphoguanosine)-ribonucleoside in mRNA + S-adenosyl-L-homocysteine</text>
        <dbReference type="Rhea" id="RHEA:67008"/>
        <dbReference type="Rhea" id="RHEA-COMP:17166"/>
        <dbReference type="Rhea" id="RHEA-COMP:17167"/>
        <dbReference type="ChEBI" id="CHEBI:57856"/>
        <dbReference type="ChEBI" id="CHEBI:59789"/>
        <dbReference type="ChEBI" id="CHEBI:156461"/>
        <dbReference type="ChEBI" id="CHEBI:167617"/>
        <dbReference type="EC" id="2.1.1.56"/>
    </reaction>
    <physiologicalReaction direction="left-to-right" evidence="2">
        <dbReference type="Rhea" id="RHEA:67009"/>
    </physiologicalReaction>
</comment>
<comment type="cofactor">
    <molecule>Uridylate-specific endoribonuclease nsp15</molecule>
    <cofactor evidence="2">
        <name>Mn(2+)</name>
        <dbReference type="ChEBI" id="CHEBI:29035"/>
    </cofactor>
    <text evidence="2">Likely affects Nsp15 binding to RNA.</text>
</comment>
<comment type="cofactor">
    <molecule>RNA-directed RNA polymerase nsp12</molecule>
    <cofactor evidence="3">
        <name>Mg(2+)</name>
        <dbReference type="ChEBI" id="CHEBI:18420"/>
    </cofactor>
</comment>
<comment type="subunit">
    <molecule>Non-structural protein 2</molecule>
    <text evidence="2">Interacts with host PHB and PHB2.</text>
</comment>
<comment type="subunit">
    <molecule>Non-structural protein 4</molecule>
    <text evidence="2">Interacts with papain-like protease nsp3 and non-structural protein 6.</text>
</comment>
<comment type="subunit">
    <molecule>3C-like proteinase nsp5</molecule>
    <text evidence="2">Monomer. Homodimer. Only the homodimer shows catalytic activity.</text>
</comment>
<comment type="subunit">
    <molecule>Non-structural protein 7</molecule>
    <text evidence="3">Interacts with nsp8 and nsp12 to form the replication-transcription complex (RTC): nsp12, nsp7, two subunits of nsp8, and up to two subunits of nsp13.</text>
</comment>
<comment type="subunit">
    <molecule>Non-structural protein 8</molecule>
    <text evidence="3">Interacts with nsp7, nsp13 and nsp12 to form the replication-transcription complex (RTC): nsp12, nsp7, two subunits of nsp8, and up to two subunits of nsp13.</text>
</comment>
<comment type="subunit">
    <molecule>Viral protein genome-linked nsp9</molecule>
    <text evidence="3">Interacts with nsp12.</text>
</comment>
<comment type="subunit">
    <molecule>Non-structural protein 10</molecule>
    <text evidence="3">Interacts with proofreading exoribonuclease nsp14 and 2'-O-methyltransferase nsp16; these interactions enhance nsp14 and nsp16 enzymatic activities.</text>
</comment>
<comment type="subunit">
    <molecule>RNA-directed RNA polymerase nsp12</molecule>
    <text evidence="3">Interacts with nsp7 and nsp8 to form the replication-transcription complex (RTC): nsp12, nsp7, two subunits of nsp8, and up to two subunits of nsp13. Interacts with nsp9.</text>
</comment>
<comment type="subunit">
    <molecule>Helicase nsp13</molecule>
    <text evidence="3">Interacts with nsp8 to form the replication-transcription complex (RTC): nsp12, nsp7, two subunits of nsp8, and up to two subunits of nsp13.</text>
</comment>
<comment type="subcellular location">
    <molecule>Papain-like proteinase nsp3</molecule>
    <subcellularLocation>
        <location evidence="36">Host membrane</location>
        <topology evidence="36">Multi-pass membrane protein</topology>
    </subcellularLocation>
</comment>
<comment type="subcellular location">
    <molecule>Non-structural protein 4</molecule>
    <subcellularLocation>
        <location evidence="36">Host membrane</location>
        <topology evidence="36">Multi-pass membrane protein</topology>
    </subcellularLocation>
</comment>
<comment type="subcellular location">
    <molecule>Non-structural protein 6</molecule>
    <subcellularLocation>
        <location evidence="36">Host membrane</location>
        <topology evidence="36">Multi-pass membrane protein</topology>
    </subcellularLocation>
</comment>
<comment type="subcellular location">
    <molecule>Non-structural protein 7</molecule>
    <subcellularLocation>
        <location evidence="1">Host cytoplasm</location>
        <location evidence="1">Host perinuclear region</location>
    </subcellularLocation>
    <text evidence="1">nsp7, nsp8, nsp9 and nsp10 are localized in cytoplasmic foci, largely perinuclear. Late in infection, they merge into confluent complexes (By similarity).</text>
</comment>
<comment type="subcellular location">
    <molecule>Non-structural protein 8</molecule>
    <subcellularLocation>
        <location evidence="1">Host cytoplasm</location>
        <location evidence="1">Host perinuclear region</location>
    </subcellularLocation>
    <text evidence="1">nsp7, nsp8, nsp9 and nsp10 are localized in cytoplasmic foci, largely perinuclear. Late in infection, they merge into confluent complexes (By similarity).</text>
</comment>
<comment type="subcellular location">
    <molecule>Viral protein genome-linked nsp9</molecule>
    <subcellularLocation>
        <location evidence="1">Host cytoplasm</location>
        <location evidence="1">Host perinuclear region</location>
    </subcellularLocation>
    <text evidence="1">nsp7, nsp8, nsp9 and nsp10 are localized in cytoplasmic foci, largely perinuclear. Late in infection, they merge into confluent complexes (By similarity).</text>
</comment>
<comment type="subcellular location">
    <molecule>Non-structural protein 10</molecule>
    <subcellularLocation>
        <location evidence="1">Host cytoplasm</location>
        <location evidence="1">Host perinuclear region</location>
    </subcellularLocation>
    <text evidence="1">nsp7, nsp8, nsp9 and nsp10 are localized in cytoplasmic foci, largely perinuclear. Late in infection, they merge into confluent complexes (By similarity).</text>
</comment>
<comment type="subcellular location">
    <molecule>Helicase nsp13</molecule>
    <subcellularLocation>
        <location evidence="36">Host endoplasmic reticulum-Golgi intermediate compartment</location>
    </subcellularLocation>
    <text evidence="1">The helicase interacts with the N protein in membranous complexes and colocalizes with sites of synthesis of new viral RNA.</text>
</comment>
<comment type="subcellular location">
    <molecule>Uridylate-specific endoribonuclease nsp15</molecule>
    <subcellularLocation>
        <location evidence="1">Host cytoplasm</location>
        <location evidence="1">Host perinuclear region</location>
    </subcellularLocation>
</comment>
<comment type="alternative products">
    <event type="ribosomal frameshifting"/>
    <isoform>
        <id>P0C6Y0-1</id>
        <name>Replicase polyprotein 1ab</name>
        <name>pp1ab</name>
        <sequence type="displayed"/>
    </isoform>
    <isoform>
        <id>P0C6V1-1</id>
        <name>Replicase polyprotein 1a</name>
        <name>pp1a</name>
        <name>ORF1a polyprotein</name>
        <sequence type="external"/>
    </isoform>
</comment>
<comment type="domain">
    <text>The hydrophobic domains (HD) could mediate the membrane association of the replication complex and thereby alter the architecture of the host cell membrane.</text>
</comment>
<comment type="PTM">
    <text evidence="1">Specific enzymatic cleavages in vivo by its own proteases yield mature proteins. 3CL-PRO and PL-PRO proteinases are autocatalytically processed (By similarity).</text>
</comment>
<comment type="miscellaneous">
    <molecule>Isoform Replicase polyprotein 1ab</molecule>
    <text>Produced by -1 ribosomal frameshifting at the 1a-1b genes boundary.</text>
</comment>
<comment type="similarity">
    <text evidence="36">Belongs to the coronaviruses polyprotein 1ab family.</text>
</comment>
<comment type="sequence caution" evidence="36">
    <conflict type="erroneous gene model prediction">
        <sequence resource="EMBL-CDS" id="AAA46457"/>
    </conflict>
</comment>
<comment type="sequence caution" evidence="36">
    <conflict type="frameshift">
        <sequence resource="EMBL-CDS" id="AAA46457"/>
    </conflict>
</comment>
<comment type="sequence caution" evidence="36">
    <conflict type="erroneous gene model prediction">
        <sequence resource="EMBL-CDS" id="AAA46458"/>
    </conflict>
</comment>
<reference key="1">
    <citation type="journal article" date="1991" name="Virology">
        <title>The complete sequence (22 kilobases) of murine coronavirus gene 1 encoding the putative proteases and RNA polymerase.</title>
        <authorList>
            <person name="Lee H.-J."/>
            <person name="Shieh C.-K."/>
            <person name="Gorbalenya A.E."/>
            <person name="Koonin E.V."/>
            <person name="la Monica N."/>
            <person name="Tuler J."/>
            <person name="Bagdzhardzhyan A."/>
            <person name="Lai M.M.C."/>
        </authorList>
    </citation>
    <scope>NUCLEOTIDE SEQUENCE [GENOMIC RNA]</scope>
</reference>
<reference key="2">
    <citation type="journal article" date="1987" name="J. Virol.">
        <title>Sequence and translation of the murine coronavirus 5'-end genomic RNA reveals the N-terminal structure of the putative RNA polymerase.</title>
        <authorList>
            <person name="Soe L.H."/>
            <person name="Shieh C.-K."/>
            <person name="Baker S.C."/>
            <person name="Chang M.F."/>
            <person name="Lai M.M.C."/>
        </authorList>
    </citation>
    <scope>NUCLEOTIDE SEQUENCE [GENOMIC RNA] OF 1-595</scope>
</reference>
<reference key="3">
    <citation type="journal article" date="1994" name="Virology">
        <title>Mouse hepatitis virus strain A59 RNA polymerase gene ORF 1a: heterogeneity among MHV strains.</title>
        <authorList>
            <person name="Bonilla P.J."/>
            <person name="Gorbalenya A.E."/>
            <person name="Weiss S.R."/>
        </authorList>
    </citation>
    <scope>SEQUENCE REVISION</scope>
</reference>
<reference key="4">
    <citation type="journal article" date="1990" name="Adv. Exp. Med. Biol.">
        <title>Murine coronavirus gene 1 polyprotein contains an autoproteolytic activity.</title>
        <authorList>
            <person name="Baker S.C."/>
            <person name="La Monica N."/>
            <person name="Shieh C.K."/>
            <person name="Lai M.M."/>
        </authorList>
    </citation>
    <scope>NUCLEOTIDE SEQUENCE [GENOMIC RNA] OF 1021-1326</scope>
</reference>
<reference key="5">
    <citation type="journal article" date="2003" name="J. Virol.">
        <title>Identification of the murine coronavirus MP1 cleavage site recognized by papain-like proteinase 2.</title>
        <authorList>
            <person name="Kanjanahaluethai A."/>
            <person name="Jukneliene D."/>
            <person name="Baker S.C."/>
        </authorList>
    </citation>
    <scope>PROTEOLYTIC PROCESSING OF POLYPROTEIN</scope>
    <scope>MUTAGENESIS OF PHE-2835; SER-2836; LEU-2837; LYS-2838; GLY-2839; GLY-2840; ALA-2841; VAL-2842 AND VAL-2846</scope>
</reference>
<reference key="6">
    <citation type="journal article" date="1998" name="Virology">
        <title>Processing of the coronavirus MHV-JHM polymerase polyprotein: identification of precursors and proteolytic products spanning 400 kilodaltons of ORF1a.</title>
        <authorList>
            <person name="Schiller J.J."/>
            <person name="Kanjanahaluethai A."/>
            <person name="Baker S.C."/>
        </authorList>
    </citation>
    <scope>PROTEOLYTIC PROCESSING OF POLYPROTEIN</scope>
    <scope>SUBCELLULAR LOCATION</scope>
</reference>
<reference key="7">
    <citation type="journal article" date="2002" name="J. Gen. Virol.">
        <title>Conservation of substrate specificities among coronavirus main proteases.</title>
        <authorList>
            <person name="Hegyi A."/>
            <person name="Ziebuhr J."/>
        </authorList>
    </citation>
    <scope>PROTEOLYTIC PROCESSING OF POLYPROTEIN</scope>
</reference>
<dbReference type="EC" id="3.4.19.12"/>
<dbReference type="EC" id="3.4.22.-"/>
<dbReference type="EC" id="2.7.7.48"/>
<dbReference type="EC" id="2.7.7.50"/>
<dbReference type="EC" id="3.6.4.12"/>
<dbReference type="EC" id="3.6.4.13"/>
<dbReference type="EC" id="2.1.1.56"/>
<dbReference type="EC" id="3.1.13.-"/>
<dbReference type="EC" id="4.6.1.-"/>
<dbReference type="EC" id="2.1.1.57"/>
<dbReference type="EMBL" id="M55148">
    <property type="protein sequence ID" value="AAA46457.1"/>
    <property type="status" value="ALT_SEQ"/>
    <property type="molecule type" value="Genomic_RNA"/>
</dbReference>
<dbReference type="EMBL" id="M55148">
    <property type="protein sequence ID" value="AAA46458.2"/>
    <property type="status" value="ALT_SEQ"/>
    <property type="molecule type" value="Genomic_RNA"/>
</dbReference>
<dbReference type="EMBL" id="M18040">
    <property type="protein sequence ID" value="AAA46466.1"/>
    <property type="molecule type" value="Genomic_RNA"/>
</dbReference>
<dbReference type="EMBL" id="S51684">
    <property type="protein sequence ID" value="AAB19566.1"/>
    <property type="molecule type" value="Genomic_RNA"/>
</dbReference>
<dbReference type="PIR" id="A36815">
    <property type="entry name" value="RRIHM2"/>
</dbReference>
<dbReference type="PIR" id="B36815">
    <property type="entry name" value="VFIHJH"/>
</dbReference>
<dbReference type="RefSeq" id="YP_209229.2">
    <molecule id="P0C6Y0-1"/>
    <property type="nucleotide sequence ID" value="AC_000192.1"/>
</dbReference>
<dbReference type="SMR" id="P0C6Y0"/>
<dbReference type="IntAct" id="P0C6Y0">
    <property type="interactions" value="5"/>
</dbReference>
<dbReference type="KEGG" id="vg:3283258"/>
<dbReference type="Proteomes" id="UP000007193">
    <property type="component" value="Genome"/>
</dbReference>
<dbReference type="GO" id="GO:0044172">
    <property type="term" value="C:host cell endoplasmic reticulum-Golgi intermediate compartment"/>
    <property type="evidence" value="ECO:0007669"/>
    <property type="project" value="UniProtKB-SubCell"/>
</dbReference>
<dbReference type="GO" id="GO:0033644">
    <property type="term" value="C:host cell membrane"/>
    <property type="evidence" value="ECO:0007669"/>
    <property type="project" value="UniProtKB-SubCell"/>
</dbReference>
<dbReference type="GO" id="GO:0044220">
    <property type="term" value="C:host cell perinuclear region of cytoplasm"/>
    <property type="evidence" value="ECO:0007669"/>
    <property type="project" value="UniProtKB-SubCell"/>
</dbReference>
<dbReference type="GO" id="GO:0016020">
    <property type="term" value="C:membrane"/>
    <property type="evidence" value="ECO:0007669"/>
    <property type="project" value="UniProtKB-KW"/>
</dbReference>
<dbReference type="GO" id="GO:0000175">
    <property type="term" value="F:3'-5'-RNA exonuclease activity"/>
    <property type="evidence" value="ECO:0007669"/>
    <property type="project" value="InterPro"/>
</dbReference>
<dbReference type="GO" id="GO:0043139">
    <property type="term" value="F:5'-3' DNA helicase activity"/>
    <property type="evidence" value="ECO:0007669"/>
    <property type="project" value="TreeGrafter"/>
</dbReference>
<dbReference type="GO" id="GO:0005524">
    <property type="term" value="F:ATP binding"/>
    <property type="evidence" value="ECO:0007669"/>
    <property type="project" value="UniProtKB-KW"/>
</dbReference>
<dbReference type="GO" id="GO:0016887">
    <property type="term" value="F:ATP hydrolysis activity"/>
    <property type="evidence" value="ECO:0007669"/>
    <property type="project" value="RHEA"/>
</dbReference>
<dbReference type="GO" id="GO:0004843">
    <property type="term" value="F:cysteine-type deubiquitinase activity"/>
    <property type="evidence" value="ECO:0007669"/>
    <property type="project" value="UniProtKB-EC"/>
</dbReference>
<dbReference type="GO" id="GO:0004197">
    <property type="term" value="F:cysteine-type endopeptidase activity"/>
    <property type="evidence" value="ECO:0007669"/>
    <property type="project" value="InterPro"/>
</dbReference>
<dbReference type="GO" id="GO:0004519">
    <property type="term" value="F:endonuclease activity"/>
    <property type="evidence" value="ECO:0007669"/>
    <property type="project" value="UniProtKB-KW"/>
</dbReference>
<dbReference type="GO" id="GO:0016829">
    <property type="term" value="F:lyase activity"/>
    <property type="evidence" value="ECO:0007669"/>
    <property type="project" value="UniProtKB-KW"/>
</dbReference>
<dbReference type="GO" id="GO:0004483">
    <property type="term" value="F:mRNA (nucleoside-2'-O-)-methyltransferase activity"/>
    <property type="evidence" value="ECO:0007669"/>
    <property type="project" value="InterPro"/>
</dbReference>
<dbReference type="GO" id="GO:0004482">
    <property type="term" value="F:mRNA 5'-cap (guanine-N7-)-methyltransferase activity"/>
    <property type="evidence" value="ECO:0007669"/>
    <property type="project" value="InterPro"/>
</dbReference>
<dbReference type="GO" id="GO:0008242">
    <property type="term" value="F:omega peptidase activity"/>
    <property type="evidence" value="ECO:0007669"/>
    <property type="project" value="InterPro"/>
</dbReference>
<dbReference type="GO" id="GO:0003724">
    <property type="term" value="F:RNA helicase activity"/>
    <property type="evidence" value="ECO:0007669"/>
    <property type="project" value="UniProtKB-EC"/>
</dbReference>
<dbReference type="GO" id="GO:0003968">
    <property type="term" value="F:RNA-directed RNA polymerase activity"/>
    <property type="evidence" value="ECO:0007669"/>
    <property type="project" value="UniProtKB-KW"/>
</dbReference>
<dbReference type="GO" id="GO:0003727">
    <property type="term" value="F:single-stranded RNA binding"/>
    <property type="evidence" value="ECO:0007669"/>
    <property type="project" value="InterPro"/>
</dbReference>
<dbReference type="GO" id="GO:0008270">
    <property type="term" value="F:zinc ion binding"/>
    <property type="evidence" value="ECO:0007669"/>
    <property type="project" value="UniProtKB-KW"/>
</dbReference>
<dbReference type="GO" id="GO:0006351">
    <property type="term" value="P:DNA-templated transcription"/>
    <property type="evidence" value="ECO:0007669"/>
    <property type="project" value="InterPro"/>
</dbReference>
<dbReference type="GO" id="GO:0006508">
    <property type="term" value="P:proteolysis"/>
    <property type="evidence" value="ECO:0007669"/>
    <property type="project" value="UniProtKB-KW"/>
</dbReference>
<dbReference type="GO" id="GO:0010506">
    <property type="term" value="P:regulation of autophagy"/>
    <property type="evidence" value="ECO:0007669"/>
    <property type="project" value="InterPro"/>
</dbReference>
<dbReference type="GO" id="GO:0039520">
    <property type="term" value="P:symbiont-mediated activation of host autophagy"/>
    <property type="evidence" value="ECO:0007669"/>
    <property type="project" value="UniProtKB-KW"/>
</dbReference>
<dbReference type="GO" id="GO:0039595">
    <property type="term" value="P:symbiont-mediated degradation of host mRNA"/>
    <property type="evidence" value="ECO:0007669"/>
    <property type="project" value="UniProtKB-KW"/>
</dbReference>
<dbReference type="GO" id="GO:0039648">
    <property type="term" value="P:symbiont-mediated perturbation of host ubiquitin-like protein modification"/>
    <property type="evidence" value="ECO:0007669"/>
    <property type="project" value="UniProtKB-KW"/>
</dbReference>
<dbReference type="GO" id="GO:0039657">
    <property type="term" value="P:symbiont-mediated suppression of host gene expression"/>
    <property type="evidence" value="ECO:0007669"/>
    <property type="project" value="UniProtKB-KW"/>
</dbReference>
<dbReference type="GO" id="GO:0039579">
    <property type="term" value="P:symbiont-mediated suppression of host ISG15-protein conjugation"/>
    <property type="evidence" value="ECO:0007669"/>
    <property type="project" value="UniProtKB-KW"/>
</dbReference>
<dbReference type="GO" id="GO:0085034">
    <property type="term" value="P:symbiont-mediated suppression of host NF-kappaB cascade"/>
    <property type="evidence" value="ECO:0007669"/>
    <property type="project" value="UniProtKB-KW"/>
</dbReference>
<dbReference type="GO" id="GO:0039502">
    <property type="term" value="P:symbiont-mediated suppression of host type I interferon-mediated signaling pathway"/>
    <property type="evidence" value="ECO:0007669"/>
    <property type="project" value="UniProtKB-KW"/>
</dbReference>
<dbReference type="GO" id="GO:0019082">
    <property type="term" value="P:viral protein processing"/>
    <property type="evidence" value="ECO:0007669"/>
    <property type="project" value="InterPro"/>
</dbReference>
<dbReference type="GO" id="GO:0039694">
    <property type="term" value="P:viral RNA genome replication"/>
    <property type="evidence" value="ECO:0007669"/>
    <property type="project" value="InterPro"/>
</dbReference>
<dbReference type="GO" id="GO:0075523">
    <property type="term" value="P:viral translational frameshifting"/>
    <property type="evidence" value="ECO:0007669"/>
    <property type="project" value="UniProtKB-KW"/>
</dbReference>
<dbReference type="CDD" id="cd21409">
    <property type="entry name" value="1B_cv_Nsp13-like"/>
    <property type="match status" value="1"/>
</dbReference>
<dbReference type="CDD" id="cd21901">
    <property type="entry name" value="alpha_betaCoV_Nsp10"/>
    <property type="match status" value="1"/>
</dbReference>
<dbReference type="CDD" id="cd21560">
    <property type="entry name" value="betaCoV-Nsp6"/>
    <property type="match status" value="1"/>
</dbReference>
<dbReference type="CDD" id="cd21722">
    <property type="entry name" value="betaCoV_Nsp13-helicase"/>
    <property type="match status" value="1"/>
</dbReference>
<dbReference type="CDD" id="cd21659">
    <property type="entry name" value="betaCoV_Nsp14"/>
    <property type="match status" value="1"/>
</dbReference>
<dbReference type="CDD" id="cd21519">
    <property type="entry name" value="betaCoV_Nsp2_MHV-like"/>
    <property type="match status" value="1"/>
</dbReference>
<dbReference type="CDD" id="cd21666">
    <property type="entry name" value="betaCoV_Nsp5_Mpro"/>
    <property type="match status" value="1"/>
</dbReference>
<dbReference type="CDD" id="cd21827">
    <property type="entry name" value="betaCoV_Nsp7"/>
    <property type="match status" value="1"/>
</dbReference>
<dbReference type="CDD" id="cd21831">
    <property type="entry name" value="betaCoV_Nsp8"/>
    <property type="match status" value="1"/>
</dbReference>
<dbReference type="CDD" id="cd21898">
    <property type="entry name" value="betaCoV_Nsp9"/>
    <property type="match status" value="1"/>
</dbReference>
<dbReference type="CDD" id="cd21732">
    <property type="entry name" value="betaCoV_PLPro"/>
    <property type="match status" value="1"/>
</dbReference>
<dbReference type="CDD" id="cd23528">
    <property type="entry name" value="capping_2-OMTase_betaCoV_Nsp16"/>
    <property type="match status" value="1"/>
</dbReference>
<dbReference type="CDD" id="cd21473">
    <property type="entry name" value="cv_Nsp4_TM"/>
    <property type="match status" value="1"/>
</dbReference>
<dbReference type="CDD" id="cd21524">
    <property type="entry name" value="DPUP_MHV_Nsp3"/>
    <property type="match status" value="1"/>
</dbReference>
<dbReference type="CDD" id="cd21593">
    <property type="entry name" value="HCoV_HKU1-like_RdRp"/>
    <property type="match status" value="1"/>
</dbReference>
<dbReference type="CDD" id="cd21167">
    <property type="entry name" value="M_alpha_beta_cv_Nsp15-like"/>
    <property type="match status" value="1"/>
</dbReference>
<dbReference type="CDD" id="cd21879">
    <property type="entry name" value="MHV-like_Nsp1"/>
    <property type="match status" value="1"/>
</dbReference>
<dbReference type="CDD" id="cd21812">
    <property type="entry name" value="MHV-like_Nsp3_betaSM"/>
    <property type="match status" value="1"/>
</dbReference>
<dbReference type="CDD" id="cd21824">
    <property type="entry name" value="MHV-like_Nsp3_NAB"/>
    <property type="match status" value="1"/>
</dbReference>
<dbReference type="CDD" id="cd21161">
    <property type="entry name" value="NendoU_cv_Nsp15-like"/>
    <property type="match status" value="1"/>
</dbReference>
<dbReference type="CDD" id="cd21171">
    <property type="entry name" value="NTD_alpha_betaCoV_Nsp15-like"/>
    <property type="match status" value="1"/>
</dbReference>
<dbReference type="CDD" id="cd21689">
    <property type="entry name" value="stalk_CoV_Nsp13-like"/>
    <property type="match status" value="1"/>
</dbReference>
<dbReference type="CDD" id="cd21714">
    <property type="entry name" value="TM_Y_MHV-like_Nsp3_C"/>
    <property type="match status" value="1"/>
</dbReference>
<dbReference type="CDD" id="cd21467">
    <property type="entry name" value="Ubl1_cv_Nsp3_N-like"/>
    <property type="match status" value="1"/>
</dbReference>
<dbReference type="CDD" id="cd21401">
    <property type="entry name" value="ZBD_cv_Nsp13-like"/>
    <property type="match status" value="1"/>
</dbReference>
<dbReference type="FunFam" id="3.40.50.150:FF:000162">
    <property type="entry name" value="Orf1ab polyprotein"/>
    <property type="match status" value="1"/>
</dbReference>
<dbReference type="FunFam" id="1.10.150.420:FF:000001">
    <property type="entry name" value="Replicase polyprotein"/>
    <property type="match status" value="1"/>
</dbReference>
<dbReference type="FunFam" id="2.40.10.10:FF:000045">
    <property type="entry name" value="Replicase polyprotein 1a"/>
    <property type="match status" value="1"/>
</dbReference>
<dbReference type="FunFam" id="2.40.10.250:FF:000002">
    <property type="entry name" value="Replicase polyprotein 1a"/>
    <property type="match status" value="1"/>
</dbReference>
<dbReference type="FunFam" id="3.40.50.11580:FF:000002">
    <property type="entry name" value="Replicase polyprotein 1ab"/>
    <property type="match status" value="1"/>
</dbReference>
<dbReference type="Gene3D" id="1.10.8.1190">
    <property type="match status" value="2"/>
</dbReference>
<dbReference type="Gene3D" id="2.60.120.1680">
    <property type="match status" value="1"/>
</dbReference>
<dbReference type="Gene3D" id="3.10.20.350">
    <property type="match status" value="1"/>
</dbReference>
<dbReference type="Gene3D" id="3.10.20.540">
    <property type="match status" value="1"/>
</dbReference>
<dbReference type="Gene3D" id="3.40.50.11580">
    <property type="match status" value="1"/>
</dbReference>
<dbReference type="Gene3D" id="6.10.140.2090">
    <property type="match status" value="1"/>
</dbReference>
<dbReference type="Gene3D" id="1.10.150.420">
    <property type="entry name" value="Coronavirus nonstructural protein 4 C-terminus"/>
    <property type="match status" value="1"/>
</dbReference>
<dbReference type="Gene3D" id="3.40.220.10">
    <property type="entry name" value="Leucine Aminopeptidase, subunit E, domain 1"/>
    <property type="match status" value="1"/>
</dbReference>
<dbReference type="Gene3D" id="1.10.1840.10">
    <property type="entry name" value="main proteinase (3clpro) structure, domain 3"/>
    <property type="match status" value="1"/>
</dbReference>
<dbReference type="Gene3D" id="3.30.160.820">
    <property type="entry name" value="Nsp15 N-terminal domain-like"/>
    <property type="match status" value="1"/>
</dbReference>
<dbReference type="Gene3D" id="1.10.8.370">
    <property type="entry name" value="nsp7 replicase"/>
    <property type="match status" value="1"/>
</dbReference>
<dbReference type="Gene3D" id="3.30.70.3540">
    <property type="entry name" value="Nsp8 replicase, head domain"/>
    <property type="match status" value="1"/>
</dbReference>
<dbReference type="Gene3D" id="3.40.50.300">
    <property type="entry name" value="P-loop containing nucleotide triphosphate hydrolases"/>
    <property type="match status" value="2"/>
</dbReference>
<dbReference type="Gene3D" id="2.40.10.250">
    <property type="entry name" value="Replicase NSP9"/>
    <property type="match status" value="1"/>
</dbReference>
<dbReference type="Gene3D" id="3.40.50.11020">
    <property type="entry name" value="Replicase polyprotein, nucleic acid-binding domain"/>
    <property type="match status" value="1"/>
</dbReference>
<dbReference type="Gene3D" id="2.40.10.10">
    <property type="entry name" value="Trypsin-like serine proteases"/>
    <property type="match status" value="2"/>
</dbReference>
<dbReference type="Gene3D" id="3.40.50.150">
    <property type="entry name" value="Vaccinia Virus protein VP39"/>
    <property type="match status" value="1"/>
</dbReference>
<dbReference type="InterPro" id="IPR027351">
    <property type="entry name" value="(+)RNA_virus_helicase_core_dom"/>
</dbReference>
<dbReference type="InterPro" id="IPR046443">
    <property type="entry name" value="a/bCoV_NSP1_glob"/>
</dbReference>
<dbReference type="InterPro" id="IPR046440">
    <property type="entry name" value="AV_NSP11N_COV_NSP15M"/>
</dbReference>
<dbReference type="InterPro" id="IPR022570">
    <property type="entry name" value="B-CoV_A_NSP1"/>
</dbReference>
<dbReference type="InterPro" id="IPR046442">
    <property type="entry name" value="bCoV_NSP1_C"/>
</dbReference>
<dbReference type="InterPro" id="IPR050534">
    <property type="entry name" value="Coronavir_polyprotein_1ab"/>
</dbReference>
<dbReference type="InterPro" id="IPR043608">
    <property type="entry name" value="CoV_NSP15_M"/>
</dbReference>
<dbReference type="InterPro" id="IPR043606">
    <property type="entry name" value="CoV_NSP15_N"/>
</dbReference>
<dbReference type="InterPro" id="IPR043613">
    <property type="entry name" value="CoV_NSP2_C"/>
</dbReference>
<dbReference type="InterPro" id="IPR047573">
    <property type="entry name" value="CoV_NSP2_M"/>
</dbReference>
<dbReference type="InterPro" id="IPR049894">
    <property type="entry name" value="COV_NSP3_3ECTO"/>
</dbReference>
<dbReference type="InterPro" id="IPR043611">
    <property type="entry name" value="CoV_NSP3_C"/>
</dbReference>
<dbReference type="InterPro" id="IPR047566">
    <property type="entry name" value="CoV_NSP3_Y"/>
</dbReference>
<dbReference type="InterPro" id="IPR032505">
    <property type="entry name" value="CoV_NSP4_C"/>
</dbReference>
<dbReference type="InterPro" id="IPR043612">
    <property type="entry name" value="CoV_NSP4_N"/>
</dbReference>
<dbReference type="InterPro" id="IPR043502">
    <property type="entry name" value="DNA/RNA_pol_sf"/>
</dbReference>
<dbReference type="InterPro" id="IPR041679">
    <property type="entry name" value="DNA2/NAM7-like_C"/>
</dbReference>
<dbReference type="InterPro" id="IPR022733">
    <property type="entry name" value="DPUP_SUD_C_bCoV"/>
</dbReference>
<dbReference type="InterPro" id="IPR037227">
    <property type="entry name" value="EndoU-like"/>
</dbReference>
<dbReference type="InterPro" id="IPR002589">
    <property type="entry name" value="Macro_dom"/>
</dbReference>
<dbReference type="InterPro" id="IPR043472">
    <property type="entry name" value="Macro_dom-like"/>
</dbReference>
<dbReference type="InterPro" id="IPR046435">
    <property type="entry name" value="N7_MTase_CoV"/>
</dbReference>
<dbReference type="InterPro" id="IPR043609">
    <property type="entry name" value="NendoU_nidovirus"/>
</dbReference>
<dbReference type="InterPro" id="IPR044863">
    <property type="entry name" value="NIRAN"/>
</dbReference>
<dbReference type="InterPro" id="IPR046438">
    <property type="entry name" value="NIV_2_O_MTASE"/>
</dbReference>
<dbReference type="InterPro" id="IPR046436">
    <property type="entry name" value="NIV_EXON"/>
</dbReference>
<dbReference type="InterPro" id="IPR036333">
    <property type="entry name" value="NSP10_sf_CoV"/>
</dbReference>
<dbReference type="InterPro" id="IPR047570">
    <property type="entry name" value="NSP12_IF_CoV"/>
</dbReference>
<dbReference type="InterPro" id="IPR044343">
    <property type="entry name" value="NSP13_1B_dom_CoV"/>
</dbReference>
<dbReference type="InterPro" id="IPR048673">
    <property type="entry name" value="NSP13_stalk_CoV"/>
</dbReference>
<dbReference type="InterPro" id="IPR048672">
    <property type="entry name" value="NSP13_ZBD_CoV"/>
</dbReference>
<dbReference type="InterPro" id="IPR027352">
    <property type="entry name" value="NSP13_ZBD_CoV-like"/>
</dbReference>
<dbReference type="InterPro" id="IPR044315">
    <property type="entry name" value="NSP14_betaCoV"/>
</dbReference>
<dbReference type="InterPro" id="IPR009466">
    <property type="entry name" value="NSP14_CoV"/>
</dbReference>
<dbReference type="InterPro" id="IPR044330">
    <property type="entry name" value="NSP15_alpha_betaCoV_N"/>
</dbReference>
<dbReference type="InterPro" id="IPR044322">
    <property type="entry name" value="NSP15_M_alpha_beta_CoV"/>
</dbReference>
<dbReference type="InterPro" id="IPR043174">
    <property type="entry name" value="NSP15_middle_sf"/>
</dbReference>
<dbReference type="InterPro" id="IPR042515">
    <property type="entry name" value="NSP15_N_CoV"/>
</dbReference>
<dbReference type="InterPro" id="IPR044401">
    <property type="entry name" value="NSP15_NendoU_CoV"/>
</dbReference>
<dbReference type="InterPro" id="IPR009461">
    <property type="entry name" value="NSP16_CoV-like"/>
</dbReference>
<dbReference type="InterPro" id="IPR044384">
    <property type="entry name" value="NSP2_MHV-like"/>
</dbReference>
<dbReference type="InterPro" id="IPR043615">
    <property type="entry name" value="NSP2_N_CoV"/>
</dbReference>
<dbReference type="InterPro" id="IPR044381">
    <property type="entry name" value="NSP3_DPUP_MHV"/>
</dbReference>
<dbReference type="InterPro" id="IPR047567">
    <property type="entry name" value="NSP3_G2M_bCoV"/>
</dbReference>
<dbReference type="InterPro" id="IPR032592">
    <property type="entry name" value="NSP3_NAB_bCoV"/>
</dbReference>
<dbReference type="InterPro" id="IPR042570">
    <property type="entry name" value="NSP3_NAB_bCoV_sf"/>
</dbReference>
<dbReference type="InterPro" id="IPR044357">
    <property type="entry name" value="NSP3_Ubl1_dom_CoV"/>
</dbReference>
<dbReference type="InterPro" id="IPR044353">
    <property type="entry name" value="Nsp3_Ubl2_dom_CoV"/>
</dbReference>
<dbReference type="InterPro" id="IPR038083">
    <property type="entry name" value="NSP3A-like"/>
</dbReference>
<dbReference type="InterPro" id="IPR038123">
    <property type="entry name" value="NSP4_C_sf_CoV"/>
</dbReference>
<dbReference type="InterPro" id="IPR044367">
    <property type="entry name" value="NSP6_betaCoV"/>
</dbReference>
<dbReference type="InterPro" id="IPR043610">
    <property type="entry name" value="NSP6_CoV"/>
</dbReference>
<dbReference type="InterPro" id="IPR014828">
    <property type="entry name" value="NSP7_CoV"/>
</dbReference>
<dbReference type="InterPro" id="IPR037204">
    <property type="entry name" value="NSP7_sf_CoV"/>
</dbReference>
<dbReference type="InterPro" id="IPR014829">
    <property type="entry name" value="NSP8_CoV"/>
</dbReference>
<dbReference type="InterPro" id="IPR037230">
    <property type="entry name" value="NSP8_sf_CoV"/>
</dbReference>
<dbReference type="InterPro" id="IPR014822">
    <property type="entry name" value="NSP9_CoV"/>
</dbReference>
<dbReference type="InterPro" id="IPR036499">
    <property type="entry name" value="NSP9_sf_CoV"/>
</dbReference>
<dbReference type="InterPro" id="IPR027417">
    <property type="entry name" value="P-loop_NTPase"/>
</dbReference>
<dbReference type="InterPro" id="IPR002705">
    <property type="entry name" value="Pept_C30/C16_B_coronavir"/>
</dbReference>
<dbReference type="InterPro" id="IPR013016">
    <property type="entry name" value="Peptidase_C16_CoV"/>
</dbReference>
<dbReference type="InterPro" id="IPR008740">
    <property type="entry name" value="Peptidase_C30_CoV"/>
</dbReference>
<dbReference type="InterPro" id="IPR043477">
    <property type="entry name" value="Peptidase_C30_dom3_CoV"/>
</dbReference>
<dbReference type="InterPro" id="IPR009003">
    <property type="entry name" value="Peptidase_S1_PA"/>
</dbReference>
<dbReference type="InterPro" id="IPR043504">
    <property type="entry name" value="Peptidase_S1_PA_chymotrypsin"/>
</dbReference>
<dbReference type="InterPro" id="IPR043177">
    <property type="entry name" value="PLpro_N_sf_CoV"/>
</dbReference>
<dbReference type="InterPro" id="IPR043503">
    <property type="entry name" value="PLpro_palm_finger_dom_CoV"/>
</dbReference>
<dbReference type="InterPro" id="IPR043178">
    <property type="entry name" value="PLpro_thumb_sf_CoV"/>
</dbReference>
<dbReference type="InterPro" id="IPR046441">
    <property type="entry name" value="RdRp_CoV"/>
</dbReference>
<dbReference type="InterPro" id="IPR044347">
    <property type="entry name" value="RdRp_HCoV_HKU1-like"/>
</dbReference>
<dbReference type="InterPro" id="IPR009469">
    <property type="entry name" value="RdRp_N_CoV"/>
</dbReference>
<dbReference type="InterPro" id="IPR001205">
    <property type="entry name" value="RNA-dir_pol_C"/>
</dbReference>
<dbReference type="InterPro" id="IPR007094">
    <property type="entry name" value="RNA-dir_pol_PSvirus"/>
</dbReference>
<dbReference type="InterPro" id="IPR018995">
    <property type="entry name" value="RNA_synth_NSP10_CoV"/>
</dbReference>
<dbReference type="InterPro" id="IPR029063">
    <property type="entry name" value="SAM-dependent_MTases_sf"/>
</dbReference>
<dbReference type="PANTHER" id="PTHR43788">
    <property type="entry name" value="DNA2/NAM7 HELICASE FAMILY MEMBER"/>
    <property type="match status" value="1"/>
</dbReference>
<dbReference type="PANTHER" id="PTHR43788:SF16">
    <property type="entry name" value="HELICASE WITH ZINC FINGER 2"/>
    <property type="match status" value="1"/>
</dbReference>
<dbReference type="Pfam" id="PF13087">
    <property type="entry name" value="AAA_12"/>
    <property type="match status" value="1"/>
</dbReference>
<dbReference type="Pfam" id="PF13245">
    <property type="entry name" value="AAA_19"/>
    <property type="match status" value="1"/>
</dbReference>
<dbReference type="Pfam" id="PF11963">
    <property type="entry name" value="B-CoV_A_NSP1"/>
    <property type="match status" value="2"/>
</dbReference>
<dbReference type="Pfam" id="PF16251">
    <property type="entry name" value="bCoV_NAB"/>
    <property type="match status" value="1"/>
</dbReference>
<dbReference type="Pfam" id="PF06471">
    <property type="entry name" value="CoV_ExoN"/>
    <property type="match status" value="1"/>
</dbReference>
<dbReference type="Pfam" id="PF06460">
    <property type="entry name" value="CoV_Methyltr_2"/>
    <property type="match status" value="1"/>
</dbReference>
<dbReference type="Pfam" id="PF09401">
    <property type="entry name" value="CoV_NSP10"/>
    <property type="match status" value="1"/>
</dbReference>
<dbReference type="Pfam" id="PF20631">
    <property type="entry name" value="CoV_NSP13_1B"/>
    <property type="match status" value="1"/>
</dbReference>
<dbReference type="Pfam" id="PF20633">
    <property type="entry name" value="CoV_NSP13_stalk"/>
    <property type="match status" value="1"/>
</dbReference>
<dbReference type="Pfam" id="PF20632">
    <property type="entry name" value="CoV_NSP13_ZBD"/>
    <property type="match status" value="1"/>
</dbReference>
<dbReference type="Pfam" id="PF19215">
    <property type="entry name" value="CoV_NSP15_C"/>
    <property type="match status" value="1"/>
</dbReference>
<dbReference type="Pfam" id="PF19216">
    <property type="entry name" value="CoV_NSP15_M"/>
    <property type="match status" value="1"/>
</dbReference>
<dbReference type="Pfam" id="PF19219">
    <property type="entry name" value="CoV_NSP15_N"/>
    <property type="match status" value="1"/>
</dbReference>
<dbReference type="Pfam" id="PF19218">
    <property type="entry name" value="CoV_NSP3_C"/>
    <property type="match status" value="1"/>
</dbReference>
<dbReference type="Pfam" id="PF16348">
    <property type="entry name" value="CoV_NSP4_C"/>
    <property type="match status" value="1"/>
</dbReference>
<dbReference type="Pfam" id="PF19217">
    <property type="entry name" value="CoV_NSP4_N"/>
    <property type="match status" value="1"/>
</dbReference>
<dbReference type="Pfam" id="PF19213">
    <property type="entry name" value="CoV_NSP6"/>
    <property type="match status" value="1"/>
</dbReference>
<dbReference type="Pfam" id="PF08716">
    <property type="entry name" value="CoV_NSP7"/>
    <property type="match status" value="1"/>
</dbReference>
<dbReference type="Pfam" id="PF08717">
    <property type="entry name" value="CoV_NSP8"/>
    <property type="match status" value="1"/>
</dbReference>
<dbReference type="Pfam" id="PF08710">
    <property type="entry name" value="CoV_NSP9"/>
    <property type="match status" value="1"/>
</dbReference>
<dbReference type="Pfam" id="PF08715">
    <property type="entry name" value="CoV_peptidase"/>
    <property type="match status" value="1"/>
</dbReference>
<dbReference type="Pfam" id="PF06478">
    <property type="entry name" value="CoV_RPol_N"/>
    <property type="match status" value="1"/>
</dbReference>
<dbReference type="Pfam" id="PF01661">
    <property type="entry name" value="Macro"/>
    <property type="match status" value="1"/>
</dbReference>
<dbReference type="Pfam" id="PF22104">
    <property type="entry name" value="MHV_Nsp3_DPUP"/>
    <property type="match status" value="1"/>
</dbReference>
<dbReference type="Pfam" id="PF01831">
    <property type="entry name" value="Peptidase_C16"/>
    <property type="match status" value="1"/>
</dbReference>
<dbReference type="Pfam" id="PF05409">
    <property type="entry name" value="Peptidase_C30"/>
    <property type="match status" value="1"/>
</dbReference>
<dbReference type="Pfam" id="PF00680">
    <property type="entry name" value="RdRP_1"/>
    <property type="match status" value="1"/>
</dbReference>
<dbReference type="SMART" id="SM00506">
    <property type="entry name" value="A1pp"/>
    <property type="match status" value="1"/>
</dbReference>
<dbReference type="SUPFAM" id="SSF144246">
    <property type="entry name" value="Coronavirus NSP10-like"/>
    <property type="match status" value="1"/>
</dbReference>
<dbReference type="SUPFAM" id="SSF140367">
    <property type="entry name" value="Coronavirus NSP7-like"/>
    <property type="match status" value="1"/>
</dbReference>
<dbReference type="SUPFAM" id="SSF143076">
    <property type="entry name" value="Coronavirus NSP8-like"/>
    <property type="match status" value="1"/>
</dbReference>
<dbReference type="SUPFAM" id="SSF56672">
    <property type="entry name" value="DNA/RNA polymerases"/>
    <property type="match status" value="1"/>
</dbReference>
<dbReference type="SUPFAM" id="SSF142877">
    <property type="entry name" value="EndoU-like"/>
    <property type="match status" value="1"/>
</dbReference>
<dbReference type="SUPFAM" id="SSF52949">
    <property type="entry name" value="Macro domain-like"/>
    <property type="match status" value="1"/>
</dbReference>
<dbReference type="SUPFAM" id="SSF159936">
    <property type="entry name" value="NSP3A-like"/>
    <property type="match status" value="1"/>
</dbReference>
<dbReference type="SUPFAM" id="SSF52540">
    <property type="entry name" value="P-loop containing nucleoside triphosphate hydrolases"/>
    <property type="match status" value="1"/>
</dbReference>
<dbReference type="SUPFAM" id="SSF101816">
    <property type="entry name" value="Replicase NSP9"/>
    <property type="match status" value="1"/>
</dbReference>
<dbReference type="SUPFAM" id="SSF53335">
    <property type="entry name" value="S-adenosyl-L-methionine-dependent methyltransferases"/>
    <property type="match status" value="2"/>
</dbReference>
<dbReference type="SUPFAM" id="SSF50494">
    <property type="entry name" value="Trypsin-like serine proteases"/>
    <property type="match status" value="1"/>
</dbReference>
<dbReference type="PROSITE" id="PS51961">
    <property type="entry name" value="AV_NSP11N_COV_NSP15M"/>
    <property type="match status" value="1"/>
</dbReference>
<dbReference type="PROSITE" id="PS51963">
    <property type="entry name" value="BCOV_NSP1_C"/>
    <property type="match status" value="1"/>
</dbReference>
<dbReference type="PROSITE" id="PS51942">
    <property type="entry name" value="BCOV_NSP3C_C"/>
    <property type="match status" value="1"/>
</dbReference>
<dbReference type="PROSITE" id="PS51994">
    <property type="entry name" value="BCOV_NSP3E_G2M"/>
    <property type="match status" value="1"/>
</dbReference>
<dbReference type="PROSITE" id="PS51945">
    <property type="entry name" value="BCOV_NSP3E_NAB"/>
    <property type="match status" value="1"/>
</dbReference>
<dbReference type="PROSITE" id="PS51993">
    <property type="entry name" value="COV_3ECTO"/>
    <property type="match status" value="1"/>
</dbReference>
<dbReference type="PROSITE" id="PS51952">
    <property type="entry name" value="COV_EXON_MTASE_COACT"/>
    <property type="match status" value="1"/>
</dbReference>
<dbReference type="PROSITE" id="PS51954">
    <property type="entry name" value="COV_N7_MTASE"/>
    <property type="match status" value="1"/>
</dbReference>
<dbReference type="PROSITE" id="PS51962">
    <property type="entry name" value="COV_NSP1"/>
    <property type="match status" value="1"/>
</dbReference>
<dbReference type="PROSITE" id="PS52000">
    <property type="entry name" value="COV_NSP12_IF"/>
    <property type="match status" value="1"/>
</dbReference>
<dbReference type="PROSITE" id="PS51948">
    <property type="entry name" value="COV_NSP12_RDRP"/>
    <property type="match status" value="1"/>
</dbReference>
<dbReference type="PROSITE" id="PS51960">
    <property type="entry name" value="COV_NSP15_NTD"/>
    <property type="match status" value="1"/>
</dbReference>
<dbReference type="PROSITE" id="PS51991">
    <property type="entry name" value="COV_NSP2_C"/>
    <property type="match status" value="1"/>
</dbReference>
<dbReference type="PROSITE" id="PS51990">
    <property type="entry name" value="COV_NSP2_M"/>
    <property type="match status" value="1"/>
</dbReference>
<dbReference type="PROSITE" id="PS51989">
    <property type="entry name" value="COV_NSP2_N"/>
    <property type="match status" value="1"/>
</dbReference>
<dbReference type="PROSITE" id="PS51992">
    <property type="entry name" value="COV_NSP3_Y"/>
    <property type="match status" value="1"/>
</dbReference>
<dbReference type="PROSITE" id="PS51943">
    <property type="entry name" value="COV_NSP3A_UBL"/>
    <property type="match status" value="1"/>
</dbReference>
<dbReference type="PROSITE" id="PS51944">
    <property type="entry name" value="COV_NSP3D_UBL"/>
    <property type="match status" value="1"/>
</dbReference>
<dbReference type="PROSITE" id="PS51946">
    <property type="entry name" value="COV_NSP4C"/>
    <property type="match status" value="1"/>
</dbReference>
<dbReference type="PROSITE" id="PS51949">
    <property type="entry name" value="COV_NSP7"/>
    <property type="match status" value="1"/>
</dbReference>
<dbReference type="PROSITE" id="PS51950">
    <property type="entry name" value="COV_NSP8"/>
    <property type="match status" value="1"/>
</dbReference>
<dbReference type="PROSITE" id="PS51951">
    <property type="entry name" value="COV_NSP9_SSRNA_BD"/>
    <property type="match status" value="1"/>
</dbReference>
<dbReference type="PROSITE" id="PS51653">
    <property type="entry name" value="CV_ZBD"/>
    <property type="match status" value="1"/>
</dbReference>
<dbReference type="PROSITE" id="PS51442">
    <property type="entry name" value="M_PRO"/>
    <property type="match status" value="1"/>
</dbReference>
<dbReference type="PROSITE" id="PS51154">
    <property type="entry name" value="MACRO"/>
    <property type="match status" value="1"/>
</dbReference>
<dbReference type="PROSITE" id="PS51958">
    <property type="entry name" value="NENDOU"/>
    <property type="match status" value="1"/>
</dbReference>
<dbReference type="PROSITE" id="PS51947">
    <property type="entry name" value="NIRAN"/>
    <property type="match status" value="1"/>
</dbReference>
<dbReference type="PROSITE" id="PS51955">
    <property type="entry name" value="NIV_2_O_MTASE"/>
    <property type="match status" value="1"/>
</dbReference>
<dbReference type="PROSITE" id="PS51953">
    <property type="entry name" value="NIV_EXON"/>
    <property type="match status" value="1"/>
</dbReference>
<dbReference type="PROSITE" id="PS51124">
    <property type="entry name" value="PEPTIDASE_C16"/>
    <property type="match status" value="2"/>
</dbReference>
<dbReference type="PROSITE" id="PS51657">
    <property type="entry name" value="PSRV_HELICASE"/>
    <property type="match status" value="1"/>
</dbReference>
<dbReference type="PROSITE" id="PS50507">
    <property type="entry name" value="RDRP_SSRNA_POS"/>
    <property type="match status" value="1"/>
</dbReference>
<evidence type="ECO:0000250" key="1"/>
<evidence type="ECO:0000250" key="2">
    <source>
        <dbReference type="UniProtKB" id="P0C6X7"/>
    </source>
</evidence>
<evidence type="ECO:0000250" key="3">
    <source>
        <dbReference type="UniProtKB" id="P0DTD1"/>
    </source>
</evidence>
<evidence type="ECO:0000255" key="4"/>
<evidence type="ECO:0000255" key="5">
    <source>
        <dbReference type="PROSITE-ProRule" id="PRU00214"/>
    </source>
</evidence>
<evidence type="ECO:0000255" key="6">
    <source>
        <dbReference type="PROSITE-ProRule" id="PRU00444"/>
    </source>
</evidence>
<evidence type="ECO:0000255" key="7">
    <source>
        <dbReference type="PROSITE-ProRule" id="PRU00490"/>
    </source>
</evidence>
<evidence type="ECO:0000255" key="8">
    <source>
        <dbReference type="PROSITE-ProRule" id="PRU00539"/>
    </source>
</evidence>
<evidence type="ECO:0000255" key="9">
    <source>
        <dbReference type="PROSITE-ProRule" id="PRU00772"/>
    </source>
</evidence>
<evidence type="ECO:0000255" key="10">
    <source>
        <dbReference type="PROSITE-ProRule" id="PRU00986"/>
    </source>
</evidence>
<evidence type="ECO:0000255" key="11">
    <source>
        <dbReference type="PROSITE-ProRule" id="PRU01289"/>
    </source>
</evidence>
<evidence type="ECO:0000255" key="12">
    <source>
        <dbReference type="PROSITE-ProRule" id="PRU01290"/>
    </source>
</evidence>
<evidence type="ECO:0000255" key="13">
    <source>
        <dbReference type="PROSITE-ProRule" id="PRU01291"/>
    </source>
</evidence>
<evidence type="ECO:0000255" key="14">
    <source>
        <dbReference type="PROSITE-ProRule" id="PRU01292"/>
    </source>
</evidence>
<evidence type="ECO:0000255" key="15">
    <source>
        <dbReference type="PROSITE-ProRule" id="PRU01293"/>
    </source>
</evidence>
<evidence type="ECO:0000255" key="16">
    <source>
        <dbReference type="PROSITE-ProRule" id="PRU01294"/>
    </source>
</evidence>
<evidence type="ECO:0000255" key="17">
    <source>
        <dbReference type="PROSITE-ProRule" id="PRU01295"/>
    </source>
</evidence>
<evidence type="ECO:0000255" key="18">
    <source>
        <dbReference type="PROSITE-ProRule" id="PRU01296"/>
    </source>
</evidence>
<evidence type="ECO:0000255" key="19">
    <source>
        <dbReference type="PROSITE-ProRule" id="PRU01297"/>
    </source>
</evidence>
<evidence type="ECO:0000255" key="20">
    <source>
        <dbReference type="PROSITE-ProRule" id="PRU01298"/>
    </source>
</evidence>
<evidence type="ECO:0000255" key="21">
    <source>
        <dbReference type="PROSITE-ProRule" id="PRU01299"/>
    </source>
</evidence>
<evidence type="ECO:0000255" key="22">
    <source>
        <dbReference type="PROSITE-ProRule" id="PRU01300"/>
    </source>
</evidence>
<evidence type="ECO:0000255" key="23">
    <source>
        <dbReference type="PROSITE-ProRule" id="PRU01303"/>
    </source>
</evidence>
<evidence type="ECO:0000255" key="24">
    <source>
        <dbReference type="PROSITE-ProRule" id="PRU01305"/>
    </source>
</evidence>
<evidence type="ECO:0000255" key="25">
    <source>
        <dbReference type="PROSITE-ProRule" id="PRU01306"/>
    </source>
</evidence>
<evidence type="ECO:0000255" key="26">
    <source>
        <dbReference type="PROSITE-ProRule" id="PRU01307"/>
    </source>
</evidence>
<evidence type="ECO:0000255" key="27">
    <source>
        <dbReference type="PROSITE-ProRule" id="PRU01308"/>
    </source>
</evidence>
<evidence type="ECO:0000255" key="28">
    <source>
        <dbReference type="PROSITE-ProRule" id="PRU01333"/>
    </source>
</evidence>
<evidence type="ECO:0000255" key="29">
    <source>
        <dbReference type="PROSITE-ProRule" id="PRU01334"/>
    </source>
</evidence>
<evidence type="ECO:0000255" key="30">
    <source>
        <dbReference type="PROSITE-ProRule" id="PRU01335"/>
    </source>
</evidence>
<evidence type="ECO:0000255" key="31">
    <source>
        <dbReference type="PROSITE-ProRule" id="PRU01336"/>
    </source>
</evidence>
<evidence type="ECO:0000255" key="32">
    <source>
        <dbReference type="PROSITE-ProRule" id="PRU01337"/>
    </source>
</evidence>
<evidence type="ECO:0000255" key="33">
    <source>
        <dbReference type="PROSITE-ProRule" id="PRU01338"/>
    </source>
</evidence>
<evidence type="ECO:0000255" key="34">
    <source>
        <dbReference type="PROSITE-ProRule" id="PRU01344"/>
    </source>
</evidence>
<evidence type="ECO:0000269" key="35">
    <source>
    </source>
</evidence>
<evidence type="ECO:0000305" key="36"/>
<name>R1AB_CVMJH</name>
<feature type="chain" id="PRO_0000037354" description="Host translation inhibitor nsp1" evidence="2">
    <location>
        <begin position="1"/>
        <end position="247"/>
    </location>
</feature>
<feature type="chain" id="PRO_0000037355" description="Non-structural protein 2" evidence="2">
    <location>
        <begin position="248"/>
        <end position="832"/>
    </location>
</feature>
<feature type="chain" id="PRO_0000037356" description="Papain-like proteinase nsp3" evidence="2">
    <location>
        <begin position="833"/>
        <end position="2840"/>
    </location>
</feature>
<feature type="chain" id="PRO_0000037357" description="Non-structural protein 4" evidence="2">
    <location>
        <begin position="2841"/>
        <end position="3336"/>
    </location>
</feature>
<feature type="chain" id="PRO_0000037358" description="3C-like proteinase nsp5" evidence="2">
    <location>
        <begin position="3337"/>
        <end position="3639"/>
    </location>
</feature>
<feature type="chain" id="PRO_0000037359" description="Non-structural protein 6" evidence="2">
    <location>
        <begin position="3640"/>
        <end position="3927"/>
    </location>
</feature>
<feature type="chain" id="PRO_0000037360" description="Non-structural protein 7" evidence="2">
    <location>
        <begin position="3928"/>
        <end position="4019"/>
    </location>
</feature>
<feature type="chain" id="PRO_0000037361" description="Non-structural protein 8" evidence="2">
    <location>
        <begin position="4020"/>
        <end position="4213"/>
    </location>
</feature>
<feature type="chain" id="PRO_0000037362" description="Viral protein genome-linked nsp9" evidence="2">
    <location>
        <begin position="4214"/>
        <end position="4323"/>
    </location>
</feature>
<feature type="chain" id="PRO_0000037363" description="Non-structural protein 10" evidence="2">
    <location>
        <begin position="4324"/>
        <end position="4460"/>
    </location>
</feature>
<feature type="chain" id="PRO_0000037364" description="RNA-directed RNA polymerase nsp12" evidence="2">
    <location>
        <begin position="4461"/>
        <end position="5388"/>
    </location>
</feature>
<feature type="chain" id="PRO_0000037365" description="Helicase nsp13" evidence="2">
    <location>
        <begin position="5389"/>
        <end position="5988"/>
    </location>
</feature>
<feature type="chain" id="PRO_0000037366" description="Guanine-N7 methyltransferase nsp14" evidence="2">
    <location>
        <begin position="5989"/>
        <end position="6507"/>
    </location>
</feature>
<feature type="chain" id="PRO_0000037367" description="Uridylate-specific endoribonuclease nsp15" evidence="2">
    <location>
        <begin position="6508"/>
        <end position="6881"/>
    </location>
</feature>
<feature type="chain" id="PRO_0000037368" description="2'-O-methyl transferase nsp16" evidence="2">
    <location>
        <begin position="6882"/>
        <end position="7180"/>
    </location>
</feature>
<feature type="transmembrane region" description="Helical" evidence="4">
    <location>
        <begin position="2228"/>
        <end position="2248"/>
    </location>
</feature>
<feature type="transmembrane region" description="Helical" evidence="4">
    <location>
        <begin position="2289"/>
        <end position="2309"/>
    </location>
</feature>
<feature type="transmembrane region" description="Helical" evidence="4">
    <location>
        <begin position="2320"/>
        <end position="2340"/>
    </location>
</feature>
<feature type="transmembrane region" description="Helical" evidence="4">
    <location>
        <begin position="2403"/>
        <end position="2423"/>
    </location>
</feature>
<feature type="transmembrane region" description="Helical" evidence="4">
    <location>
        <begin position="2445"/>
        <end position="2465"/>
    </location>
</feature>
<feature type="transmembrane region" description="Helical" evidence="4">
    <location>
        <begin position="2846"/>
        <end position="2866"/>
    </location>
</feature>
<feature type="transmembrane region" description="Helical" evidence="4">
    <location>
        <begin position="3099"/>
        <end position="3119"/>
    </location>
</feature>
<feature type="transmembrane region" description="Helical" evidence="4">
    <location>
        <begin position="3121"/>
        <end position="3141"/>
    </location>
</feature>
<feature type="transmembrane region" description="Helical" evidence="4">
    <location>
        <begin position="3153"/>
        <end position="3173"/>
    </location>
</feature>
<feature type="transmembrane region" description="Helical" evidence="4">
    <location>
        <begin position="3180"/>
        <end position="3200"/>
    </location>
</feature>
<feature type="transmembrane region" description="Helical" evidence="4">
    <location>
        <begin position="3205"/>
        <end position="3225"/>
    </location>
</feature>
<feature type="transmembrane region" description="Helical" evidence="4">
    <location>
        <begin position="3648"/>
        <end position="3668"/>
    </location>
</feature>
<feature type="transmembrane region" description="Helical" evidence="4">
    <location>
        <begin position="3678"/>
        <end position="3698"/>
    </location>
</feature>
<feature type="transmembrane region" description="Helical" evidence="4">
    <location>
        <begin position="3705"/>
        <end position="3725"/>
    </location>
</feature>
<feature type="transmembrane region" description="Helical" evidence="4">
    <location>
        <begin position="3748"/>
        <end position="3768"/>
    </location>
</feature>
<feature type="transmembrane region" description="Helical" evidence="4">
    <location>
        <begin position="3775"/>
        <end position="3795"/>
    </location>
</feature>
<feature type="transmembrane region" description="Helical" evidence="4">
    <location>
        <begin position="3802"/>
        <end position="3822"/>
    </location>
</feature>
<feature type="transmembrane region" description="Helical" evidence="4">
    <location>
        <begin position="3846"/>
        <end position="3866"/>
    </location>
</feature>
<feature type="domain" description="CoV Nsp1 globular" evidence="26">
    <location>
        <begin position="54"/>
        <end position="196"/>
    </location>
</feature>
<feature type="domain" description="BetaCoV Nsp1 C-terminal" evidence="27">
    <location>
        <begin position="217"/>
        <end position="247"/>
    </location>
</feature>
<feature type="domain" description="CoV Nsp2 N-terminal" evidence="28">
    <location>
        <begin position="251"/>
        <end position="513"/>
    </location>
</feature>
<feature type="domain" description="CoV Nsp2 middle" evidence="29">
    <location>
        <begin position="518"/>
        <end position="706"/>
    </location>
</feature>
<feature type="domain" description="CoV Nsp2 C-terminal" evidence="30">
    <location>
        <begin position="726"/>
        <end position="832"/>
    </location>
</feature>
<feature type="domain" description="Ubiquitin-like 1" evidence="5">
    <location>
        <begin position="834"/>
        <end position="946"/>
    </location>
</feature>
<feature type="domain" description="Peptidase C16 1" evidence="6">
    <location>
        <begin position="1083"/>
        <end position="1320"/>
    </location>
</feature>
<feature type="domain" description="Macro" evidence="7">
    <location>
        <begin position="1321"/>
        <end position="1481"/>
    </location>
</feature>
<feature type="domain" description="DPUP" evidence="11">
    <location>
        <begin position="1536"/>
        <end position="1608"/>
    </location>
</feature>
<feature type="domain" description="Ubiquitin-like 2" evidence="5">
    <location>
        <begin position="1607"/>
        <end position="1662"/>
    </location>
</feature>
<feature type="domain" description="Peptidase C16 2" evidence="6">
    <location>
        <begin position="1677"/>
        <end position="1936"/>
    </location>
</feature>
<feature type="domain" description="Nucleic acid-binding" evidence="12">
    <location>
        <begin position="1950"/>
        <end position="2051"/>
    </location>
</feature>
<feature type="domain" description="G2M" evidence="33">
    <location>
        <begin position="2106"/>
        <end position="2259"/>
    </location>
</feature>
<feature type="domain" description="3Ecto" evidence="32">
    <location>
        <begin position="2325"/>
        <end position="2386"/>
    </location>
</feature>
<feature type="domain" description="CoV Nsp3 Y" evidence="31">
    <location>
        <begin position="2473"/>
        <end position="2840"/>
    </location>
</feature>
<feature type="domain" description="Nsp4C" evidence="13">
    <location>
        <begin position="3239"/>
        <end position="3336"/>
    </location>
</feature>
<feature type="domain" description="Peptidase C30" evidence="9">
    <location>
        <begin position="3337"/>
        <end position="3639"/>
    </location>
</feature>
<feature type="domain" description="RdRp Nsp7 cofactor" evidence="16">
    <location>
        <begin position="3928"/>
        <end position="4016"/>
    </location>
</feature>
<feature type="domain" description="RdRp Nsp8 cofactor" evidence="17">
    <location>
        <begin position="4017"/>
        <end position="4213"/>
    </location>
</feature>
<feature type="domain" description="Nsp9 ssRNA-binding" evidence="18">
    <location>
        <begin position="4214"/>
        <end position="4323"/>
    </location>
</feature>
<feature type="domain" description="ExoN/MTase coactivator" evidence="19">
    <location>
        <begin position="4324"/>
        <end position="4461"/>
    </location>
</feature>
<feature type="domain" description="NiRAN" evidence="14">
    <location>
        <begin position="4466"/>
        <end position="4721"/>
    </location>
</feature>
<feature type="domain" description="Nsp12 Interface" evidence="34">
    <location>
        <begin position="4722"/>
        <end position="4820"/>
    </location>
</feature>
<feature type="domain" description="Nsp12 RNA-dependent RNA polymerase" evidence="15">
    <location>
        <begin position="4821"/>
        <end position="5388"/>
    </location>
</feature>
<feature type="domain" description="RdRp catalytic" evidence="8">
    <location>
        <begin position="5068"/>
        <end position="5230"/>
    </location>
</feature>
<feature type="domain" description="CV ZBD" evidence="10">
    <location>
        <begin position="5389"/>
        <end position="5501"/>
    </location>
</feature>
<feature type="domain" description="(+)RNA virus helicase ATP-binding">
    <location>
        <begin position="5644"/>
        <end position="5825"/>
    </location>
</feature>
<feature type="domain" description="(+)RNA virus helicase C-terminal">
    <location>
        <begin position="5826"/>
        <end position="6003"/>
    </location>
</feature>
<feature type="domain" description="ExoN" evidence="20">
    <location>
        <begin position="6057"/>
        <end position="6272"/>
    </location>
</feature>
<feature type="domain" description="N7-MTase" evidence="21">
    <location>
        <begin position="6281"/>
        <end position="6507"/>
    </location>
</feature>
<feature type="domain" description="Nsp15 N-terminal oligomerization" evidence="24">
    <location>
        <begin position="6508"/>
        <end position="6568"/>
    </location>
</feature>
<feature type="domain" description="AV-Nsp11N/CoV-Nsp15M" evidence="25">
    <location>
        <begin position="6569"/>
        <end position="6689"/>
    </location>
</feature>
<feature type="domain" description="NendoU" evidence="23">
    <location>
        <begin position="6739"/>
        <end position="6878"/>
    </location>
</feature>
<feature type="domain" description="Nidovirus-type SAM-dependent 2'-O-MTase" evidence="22">
    <location>
        <begin position="6883"/>
        <end position="7177"/>
    </location>
</feature>
<feature type="zinc finger region" description="C4-type 1" evidence="6">
    <location>
        <begin position="1197"/>
        <end position="1225"/>
    </location>
</feature>
<feature type="zinc finger region" description="C4-type 2" evidence="6">
    <location>
        <begin position="1793"/>
        <end position="1829"/>
    </location>
</feature>
<feature type="zinc finger region" evidence="1">
    <location>
        <begin position="4397"/>
        <end position="4413"/>
    </location>
</feature>
<feature type="zinc finger region" evidence="1">
    <location>
        <begin position="4439"/>
        <end position="4452"/>
    </location>
</feature>
<feature type="region of interest" description="C4" evidence="28">
    <location>
        <begin position="390"/>
        <end position="414"/>
    </location>
</feature>
<feature type="region of interest" description="HD1">
    <location>
        <begin position="2228"/>
        <end position="2465"/>
    </location>
</feature>
<feature type="region of interest" description="Y1" evidence="31">
    <location>
        <begin position="2473"/>
        <end position="2563"/>
    </location>
</feature>
<feature type="region of interest" description="ZF1" evidence="31">
    <location>
        <begin position="2477"/>
        <end position="2490"/>
    </location>
</feature>
<feature type="region of interest" description="ZF2" evidence="31">
    <location>
        <begin position="2523"/>
        <end position="2533"/>
    </location>
</feature>
<feature type="region of interest" description="CoV-Y" evidence="31">
    <location>
        <begin position="2564"/>
        <end position="2840"/>
    </location>
</feature>
<feature type="region of interest" description="Y2" evidence="31">
    <location>
        <begin position="2564"/>
        <end position="2656"/>
    </location>
</feature>
<feature type="region of interest" description="Y3" evidence="31">
    <location>
        <begin position="2657"/>
        <end position="2739"/>
    </location>
</feature>
<feature type="region of interest" description="Y4" evidence="31">
    <location>
        <begin position="2740"/>
        <end position="2840"/>
    </location>
</feature>
<feature type="region of interest" description="HD2">
    <location>
        <begin position="2846"/>
        <end position="3225"/>
    </location>
</feature>
<feature type="region of interest" description="HD3">
    <location>
        <begin position="3648"/>
        <end position="3866"/>
    </location>
</feature>
<feature type="region of interest" description="RdRp Fingers N-ter" evidence="15">
    <location>
        <begin position="4823"/>
        <end position="5037"/>
    </location>
</feature>
<feature type="region of interest" description="RdRp Palm N-ter" evidence="15">
    <location>
        <begin position="5038"/>
        <end position="5076"/>
    </location>
</feature>
<feature type="region of interest" description="RdRp Fingers C-ter" evidence="15">
    <location>
        <begin position="5077"/>
        <end position="5135"/>
    </location>
</feature>
<feature type="region of interest" description="RdRp Palm C-ter" evidence="15">
    <location>
        <begin position="5136"/>
        <end position="5271"/>
    </location>
</feature>
<feature type="region of interest" description="RdRp Thumb" evidence="15">
    <location>
        <begin position="5272"/>
        <end position="5388"/>
    </location>
</feature>
<feature type="region of interest" description="GpppA-binding" evidence="21">
    <location>
        <begin position="6394"/>
        <end position="6408"/>
    </location>
</feature>
<feature type="active site" description="For PL1-PRO activity" evidence="6">
    <location>
        <position position="1120"/>
    </location>
</feature>
<feature type="active site" description="For PL1-PRO activity" evidence="6">
    <location>
        <position position="1271"/>
    </location>
</feature>
<feature type="active site" description="For PL1-PRO activity" evidence="6">
    <location>
        <position position="1282"/>
    </location>
</feature>
<feature type="active site" description="For PL2-PRO activity" evidence="6">
    <location>
        <position position="1715"/>
    </location>
</feature>
<feature type="active site" description="For PL2-PRO activity" evidence="6">
    <location>
        <position position="1872"/>
    </location>
</feature>
<feature type="active site" description="For PL2-PRO activity" evidence="6">
    <location>
        <position position="1886"/>
    </location>
</feature>
<feature type="active site" description="For 3CL-PRO activity" evidence="9">
    <location>
        <position position="3377"/>
    </location>
</feature>
<feature type="active site" description="For 3CL-PRO activity" evidence="9">
    <location>
        <position position="3481"/>
    </location>
</feature>
<feature type="active site" evidence="15">
    <location>
        <position position="5215"/>
    </location>
</feature>
<feature type="active site" evidence="15">
    <location>
        <position position="5216"/>
    </location>
</feature>
<feature type="active site" evidence="15">
    <location>
        <position position="5217"/>
    </location>
</feature>
<feature type="active site" evidence="20">
    <location>
        <position position="6075"/>
    </location>
</feature>
<feature type="active site" evidence="20">
    <location>
        <position position="6077"/>
    </location>
</feature>
<feature type="active site" evidence="20">
    <location>
        <position position="6176"/>
    </location>
</feature>
<feature type="active site" evidence="20">
    <location>
        <position position="6253"/>
    </location>
</feature>
<feature type="active site" evidence="20">
    <location>
        <position position="6258"/>
    </location>
</feature>
<feature type="active site" evidence="22">
    <location>
        <position position="6927"/>
    </location>
</feature>
<feature type="active site" evidence="22">
    <location>
        <position position="7011"/>
    </location>
</feature>
<feature type="active site" evidence="22">
    <location>
        <position position="7051"/>
    </location>
</feature>
<feature type="active site" evidence="22">
    <location>
        <position position="7084"/>
    </location>
</feature>
<feature type="binding site" evidence="28">
    <location>
        <position position="390"/>
    </location>
    <ligand>
        <name>Zn(2+)</name>
        <dbReference type="ChEBI" id="CHEBI:29105"/>
        <label>1</label>
    </ligand>
</feature>
<feature type="binding site" evidence="28">
    <location>
        <position position="395"/>
    </location>
    <ligand>
        <name>Zn(2+)</name>
        <dbReference type="ChEBI" id="CHEBI:29105"/>
        <label>1</label>
    </ligand>
</feature>
<feature type="binding site" evidence="28">
    <location>
        <position position="411"/>
    </location>
    <ligand>
        <name>Zn(2+)</name>
        <dbReference type="ChEBI" id="CHEBI:29105"/>
        <label>1</label>
    </ligand>
</feature>
<feature type="binding site" evidence="28">
    <location>
        <position position="414"/>
    </location>
    <ligand>
        <name>Zn(2+)</name>
        <dbReference type="ChEBI" id="CHEBI:29105"/>
        <label>1</label>
    </ligand>
</feature>
<feature type="binding site" evidence="6">
    <location>
        <position position="1197"/>
    </location>
    <ligand>
        <name>Zn(2+)</name>
        <dbReference type="ChEBI" id="CHEBI:29105"/>
        <label>2</label>
    </ligand>
</feature>
<feature type="binding site" evidence="6">
    <location>
        <position position="1200"/>
    </location>
    <ligand>
        <name>Zn(2+)</name>
        <dbReference type="ChEBI" id="CHEBI:29105"/>
        <label>2</label>
    </ligand>
</feature>
<feature type="binding site" evidence="6">
    <location>
        <position position="1223"/>
    </location>
    <ligand>
        <name>Zn(2+)</name>
        <dbReference type="ChEBI" id="CHEBI:29105"/>
        <label>2</label>
    </ligand>
</feature>
<feature type="binding site" evidence="6">
    <location>
        <position position="1225"/>
    </location>
    <ligand>
        <name>Zn(2+)</name>
        <dbReference type="ChEBI" id="CHEBI:29105"/>
        <label>2</label>
    </ligand>
</feature>
<feature type="binding site" evidence="6">
    <location>
        <position position="1793"/>
    </location>
    <ligand>
        <name>Zn(2+)</name>
        <dbReference type="ChEBI" id="CHEBI:29105"/>
        <label>3</label>
    </ligand>
</feature>
<feature type="binding site" evidence="6">
    <location>
        <position position="1795"/>
    </location>
    <ligand>
        <name>Zn(2+)</name>
        <dbReference type="ChEBI" id="CHEBI:29105"/>
        <label>3</label>
    </ligand>
</feature>
<feature type="binding site" evidence="6">
    <location>
        <position position="1827"/>
    </location>
    <ligand>
        <name>Zn(2+)</name>
        <dbReference type="ChEBI" id="CHEBI:29105"/>
        <label>3</label>
    </ligand>
</feature>
<feature type="binding site" evidence="6">
    <location>
        <position position="1829"/>
    </location>
    <ligand>
        <name>Zn(2+)</name>
        <dbReference type="ChEBI" id="CHEBI:29105"/>
        <label>3</label>
    </ligand>
</feature>
<feature type="binding site" evidence="31">
    <location>
        <position position="2477"/>
    </location>
    <ligand>
        <name>Zn(2+)</name>
        <dbReference type="ChEBI" id="CHEBI:29105"/>
        <label>4</label>
    </ligand>
</feature>
<feature type="binding site" evidence="31">
    <location>
        <position position="2482"/>
    </location>
    <ligand>
        <name>Zn(2+)</name>
        <dbReference type="ChEBI" id="CHEBI:29105"/>
        <label>4</label>
    </ligand>
</feature>
<feature type="binding site" evidence="31">
    <location>
        <position position="2487"/>
    </location>
    <ligand>
        <name>Zn(2+)</name>
        <dbReference type="ChEBI" id="CHEBI:29105"/>
        <label>4</label>
    </ligand>
</feature>
<feature type="binding site" evidence="31">
    <location>
        <position position="2490"/>
    </location>
    <ligand>
        <name>Zn(2+)</name>
        <dbReference type="ChEBI" id="CHEBI:29105"/>
        <label>4</label>
    </ligand>
</feature>
<feature type="binding site" evidence="31">
    <location>
        <position position="2523"/>
    </location>
    <ligand>
        <name>Zn(2+)</name>
        <dbReference type="ChEBI" id="CHEBI:29105"/>
        <label>5</label>
    </ligand>
</feature>
<feature type="binding site" evidence="31">
    <location>
        <position position="2526"/>
    </location>
    <ligand>
        <name>Zn(2+)</name>
        <dbReference type="ChEBI" id="CHEBI:29105"/>
        <label>5</label>
    </ligand>
</feature>
<feature type="binding site" evidence="31">
    <location>
        <position position="2530"/>
    </location>
    <ligand>
        <name>Zn(2+)</name>
        <dbReference type="ChEBI" id="CHEBI:29105"/>
        <label>5</label>
    </ligand>
</feature>
<feature type="binding site" evidence="31">
    <location>
        <position position="2533"/>
    </location>
    <ligand>
        <name>Zn(2+)</name>
        <dbReference type="ChEBI" id="CHEBI:29105"/>
        <label>5</label>
    </ligand>
</feature>
<feature type="binding site" evidence="19">
    <location>
        <position position="4397"/>
    </location>
    <ligand>
        <name>Zn(2+)</name>
        <dbReference type="ChEBI" id="CHEBI:29105"/>
        <label>6</label>
    </ligand>
</feature>
<feature type="binding site" evidence="19">
    <location>
        <position position="4400"/>
    </location>
    <ligand>
        <name>Zn(2+)</name>
        <dbReference type="ChEBI" id="CHEBI:29105"/>
        <label>6</label>
    </ligand>
</feature>
<feature type="binding site" evidence="19">
    <location>
        <position position="4406"/>
    </location>
    <ligand>
        <name>Zn(2+)</name>
        <dbReference type="ChEBI" id="CHEBI:29105"/>
        <label>6</label>
    </ligand>
</feature>
<feature type="binding site" evidence="19">
    <location>
        <position position="4413"/>
    </location>
    <ligand>
        <name>Zn(2+)</name>
        <dbReference type="ChEBI" id="CHEBI:29105"/>
        <label>6</label>
    </ligand>
</feature>
<feature type="binding site" evidence="19">
    <location>
        <position position="4439"/>
    </location>
    <ligand>
        <name>Zn(2+)</name>
        <dbReference type="ChEBI" id="CHEBI:29105"/>
        <label>7</label>
    </ligand>
</feature>
<feature type="binding site" evidence="19">
    <location>
        <position position="4442"/>
    </location>
    <ligand>
        <name>Zn(2+)</name>
        <dbReference type="ChEBI" id="CHEBI:29105"/>
        <label>7</label>
    </ligand>
</feature>
<feature type="binding site" evidence="19">
    <location>
        <position position="4450"/>
    </location>
    <ligand>
        <name>Zn(2+)</name>
        <dbReference type="ChEBI" id="CHEBI:29105"/>
        <label>7</label>
    </ligand>
</feature>
<feature type="binding site" evidence="19">
    <location>
        <position position="4452"/>
    </location>
    <ligand>
        <name>Zn(2+)</name>
        <dbReference type="ChEBI" id="CHEBI:29105"/>
        <label>7</label>
    </ligand>
</feature>
<feature type="binding site" evidence="3">
    <location>
        <position position="4669"/>
    </location>
    <ligand>
        <name>Mn(2+)</name>
        <dbReference type="ChEBI" id="CHEBI:29035"/>
    </ligand>
</feature>
<feature type="binding site" evidence="3">
    <location>
        <position position="4678"/>
    </location>
    <ligand>
        <name>Mn(2+)</name>
        <dbReference type="ChEBI" id="CHEBI:29035"/>
    </ligand>
</feature>
<feature type="binding site" evidence="34">
    <location>
        <position position="4751"/>
    </location>
    <ligand>
        <name>Zn(2+)</name>
        <dbReference type="ChEBI" id="CHEBI:29105"/>
        <label>8</label>
    </ligand>
</feature>
<feature type="binding site" evidence="34">
    <location>
        <position position="4757"/>
    </location>
    <ligand>
        <name>Zn(2+)</name>
        <dbReference type="ChEBI" id="CHEBI:29105"/>
        <label>8</label>
    </ligand>
</feature>
<feature type="binding site" evidence="34">
    <location>
        <position position="4762"/>
    </location>
    <ligand>
        <name>Zn(2+)</name>
        <dbReference type="ChEBI" id="CHEBI:29105"/>
        <label>8</label>
    </ligand>
</feature>
<feature type="binding site" evidence="34">
    <location>
        <position position="4766"/>
    </location>
    <ligand>
        <name>Zn(2+)</name>
        <dbReference type="ChEBI" id="CHEBI:29105"/>
        <label>8</label>
    </ligand>
</feature>
<feature type="binding site" evidence="15">
    <location>
        <position position="4943"/>
    </location>
    <ligand>
        <name>Zn(2+)</name>
        <dbReference type="ChEBI" id="CHEBI:29105"/>
        <label>9</label>
    </ligand>
</feature>
<feature type="binding site" evidence="15">
    <location>
        <position position="5098"/>
    </location>
    <ligand>
        <name>Zn(2+)</name>
        <dbReference type="ChEBI" id="CHEBI:29105"/>
        <label>9</label>
    </ligand>
</feature>
<feature type="binding site" evidence="15">
    <location>
        <position position="5101"/>
    </location>
    <ligand>
        <name>Zn(2+)</name>
        <dbReference type="ChEBI" id="CHEBI:29105"/>
        <label>9</label>
    </ligand>
</feature>
<feature type="binding site" evidence="15">
    <location>
        <position position="5102"/>
    </location>
    <ligand>
        <name>Zn(2+)</name>
        <dbReference type="ChEBI" id="CHEBI:29105"/>
        <label>9</label>
    </ligand>
</feature>
<feature type="binding site" evidence="10">
    <location>
        <position position="5393"/>
    </location>
    <ligand>
        <name>Zn(2+)</name>
        <dbReference type="ChEBI" id="CHEBI:29105"/>
        <label>10</label>
    </ligand>
</feature>
<feature type="binding site" evidence="10">
    <location>
        <position position="5396"/>
    </location>
    <ligand>
        <name>Zn(2+)</name>
        <dbReference type="ChEBI" id="CHEBI:29105"/>
        <label>10</label>
    </ligand>
</feature>
<feature type="binding site" evidence="10">
    <location>
        <position position="5404"/>
    </location>
    <ligand>
        <name>Zn(2+)</name>
        <dbReference type="ChEBI" id="CHEBI:29105"/>
        <label>11</label>
    </ligand>
</feature>
<feature type="binding site" evidence="10">
    <location>
        <position position="5407"/>
    </location>
    <ligand>
        <name>Zn(2+)</name>
        <dbReference type="ChEBI" id="CHEBI:29105"/>
        <label>11</label>
    </ligand>
</feature>
<feature type="binding site" evidence="10">
    <location>
        <position position="5414"/>
    </location>
    <ligand>
        <name>Zn(2+)</name>
        <dbReference type="ChEBI" id="CHEBI:29105"/>
        <label>10</label>
    </ligand>
</feature>
<feature type="binding site" evidence="10">
    <location>
        <position position="5417"/>
    </location>
    <ligand>
        <name>Zn(2+)</name>
        <dbReference type="ChEBI" id="CHEBI:29105"/>
        <label>10</label>
    </ligand>
</feature>
<feature type="binding site" evidence="10">
    <location>
        <position position="5421"/>
    </location>
    <ligand>
        <name>Zn(2+)</name>
        <dbReference type="ChEBI" id="CHEBI:29105"/>
        <label>11</label>
    </ligand>
</feature>
<feature type="binding site" evidence="10">
    <location>
        <position position="5427"/>
    </location>
    <ligand>
        <name>Zn(2+)</name>
        <dbReference type="ChEBI" id="CHEBI:29105"/>
        <label>11</label>
    </ligand>
</feature>
<feature type="binding site" evidence="10">
    <location>
        <position position="5438"/>
    </location>
    <ligand>
        <name>Zn(2+)</name>
        <dbReference type="ChEBI" id="CHEBI:29105"/>
        <label>12</label>
    </ligand>
</feature>
<feature type="binding site" evidence="10">
    <location>
        <position position="5443"/>
    </location>
    <ligand>
        <name>Zn(2+)</name>
        <dbReference type="ChEBI" id="CHEBI:29105"/>
        <label>12</label>
    </ligand>
</feature>
<feature type="binding site" evidence="10">
    <location>
        <position position="5460"/>
    </location>
    <ligand>
        <name>Zn(2+)</name>
        <dbReference type="ChEBI" id="CHEBI:29105"/>
        <label>12</label>
    </ligand>
</feature>
<feature type="binding site" evidence="10">
    <location>
        <position position="5463"/>
    </location>
    <ligand>
        <name>Zn(2+)</name>
        <dbReference type="ChEBI" id="CHEBI:29105"/>
        <label>12</label>
    </ligand>
</feature>
<feature type="binding site" evidence="1">
    <location>
        <begin position="5669"/>
        <end position="5676"/>
    </location>
    <ligand>
        <name>ATP</name>
        <dbReference type="ChEBI" id="CHEBI:30616"/>
    </ligand>
</feature>
<feature type="binding site" evidence="20">
    <location>
        <position position="6192"/>
    </location>
    <ligand>
        <name>Zn(2+)</name>
        <dbReference type="ChEBI" id="CHEBI:29105"/>
        <label>13</label>
    </ligand>
</feature>
<feature type="binding site" evidence="20">
    <location>
        <position position="6195"/>
    </location>
    <ligand>
        <name>Zn(2+)</name>
        <dbReference type="ChEBI" id="CHEBI:29105"/>
        <label>13</label>
    </ligand>
</feature>
<feature type="binding site" evidence="20">
    <location>
        <position position="6211"/>
    </location>
    <ligand>
        <name>Zn(2+)</name>
        <dbReference type="ChEBI" id="CHEBI:29105"/>
        <label>13</label>
    </ligand>
</feature>
<feature type="binding site" evidence="20">
    <location>
        <position position="6214"/>
    </location>
    <ligand>
        <name>Zn(2+)</name>
        <dbReference type="ChEBI" id="CHEBI:29105"/>
        <label>13</label>
    </ligand>
</feature>
<feature type="binding site" evidence="20">
    <location>
        <position position="6242"/>
    </location>
    <ligand>
        <name>Zn(2+)</name>
        <dbReference type="ChEBI" id="CHEBI:29105"/>
        <label>14</label>
    </ligand>
</feature>
<feature type="binding site" evidence="20">
    <location>
        <position position="6246"/>
    </location>
    <ligand>
        <name>Zn(2+)</name>
        <dbReference type="ChEBI" id="CHEBI:29105"/>
        <label>14</label>
    </ligand>
</feature>
<feature type="binding site" evidence="20">
    <location>
        <position position="6249"/>
    </location>
    <ligand>
        <name>Zn(2+)</name>
        <dbReference type="ChEBI" id="CHEBI:29105"/>
        <label>14</label>
    </ligand>
</feature>
<feature type="binding site" evidence="20">
    <location>
        <position position="6264"/>
    </location>
    <ligand>
        <name>Zn(2+)</name>
        <dbReference type="ChEBI" id="CHEBI:29105"/>
        <label>14</label>
    </ligand>
</feature>
<feature type="binding site" evidence="21">
    <location>
        <begin position="6316"/>
        <end position="6322"/>
    </location>
    <ligand>
        <name>S-adenosyl-L-methionine</name>
        <dbReference type="ChEBI" id="CHEBI:59789"/>
    </ligand>
</feature>
<feature type="binding site" evidence="21">
    <location>
        <position position="6432"/>
    </location>
    <ligand>
        <name>Zn(2+)</name>
        <dbReference type="ChEBI" id="CHEBI:29105"/>
        <label>15</label>
    </ligand>
</feature>
<feature type="binding site" evidence="21">
    <location>
        <position position="6453"/>
    </location>
    <ligand>
        <name>Zn(2+)</name>
        <dbReference type="ChEBI" id="CHEBI:29105"/>
        <label>15</label>
    </ligand>
</feature>
<feature type="binding site" evidence="21">
    <location>
        <position position="6464"/>
    </location>
    <ligand>
        <name>Zn(2+)</name>
        <dbReference type="ChEBI" id="CHEBI:29105"/>
        <label>15</label>
    </ligand>
</feature>
<feature type="binding site" evidence="21">
    <location>
        <position position="6467"/>
    </location>
    <ligand>
        <name>Zn(2+)</name>
        <dbReference type="ChEBI" id="CHEBI:29105"/>
        <label>15</label>
    </ligand>
</feature>
<feature type="site" description="Cleavage; by PL1-PRO" evidence="36">
    <location>
        <begin position="247"/>
        <end position="248"/>
    </location>
</feature>
<feature type="site" description="Cleavage; by PL1-PRO" evidence="36">
    <location>
        <begin position="832"/>
        <end position="833"/>
    </location>
</feature>
<feature type="site" description="Cleavage; by PL2-PRO" evidence="36">
    <location>
        <begin position="2840"/>
        <end position="2841"/>
    </location>
</feature>
<feature type="site" description="Cleavage; by 3CL-PRO" evidence="36">
    <location>
        <begin position="3336"/>
        <end position="3337"/>
    </location>
</feature>
<feature type="site" description="Cleavage; by 3CL-PRO" evidence="36">
    <location>
        <begin position="3639"/>
        <end position="3640"/>
    </location>
</feature>
<feature type="site" description="Cleavage; by 3CL-PRO" evidence="36">
    <location>
        <begin position="3927"/>
        <end position="3928"/>
    </location>
</feature>
<feature type="site" description="Cleavage; by 3CL-PRO" evidence="36">
    <location>
        <begin position="4019"/>
        <end position="4020"/>
    </location>
</feature>
<feature type="site" description="Cleavage; by 3CL-PRO" evidence="36">
    <location>
        <begin position="4213"/>
        <end position="4214"/>
    </location>
</feature>
<feature type="site" description="Cleavage; by 3CL-PRO" evidence="36">
    <location>
        <begin position="4323"/>
        <end position="4324"/>
    </location>
</feature>
<feature type="site" description="Cleavage; by 3CL-PRO" evidence="36">
    <location>
        <begin position="4460"/>
        <end position="4461"/>
    </location>
</feature>
<feature type="site" description="Cleavage; by 3CL-PRO" evidence="36">
    <location>
        <begin position="5388"/>
        <end position="5389"/>
    </location>
</feature>
<feature type="site" description="Cleavage; by 3CL-PRO" evidence="36">
    <location>
        <begin position="5988"/>
        <end position="5989"/>
    </location>
</feature>
<feature type="site" description="Cleavage; by 3CL-PRO" evidence="36">
    <location>
        <begin position="6507"/>
        <end position="6508"/>
    </location>
</feature>
<feature type="site" description="Cleavage; by 3CL-PRO" evidence="36">
    <location>
        <begin position="6881"/>
        <end position="6882"/>
    </location>
</feature>
<feature type="disulfide bond" evidence="32">
    <location>
        <begin position="2341"/>
        <end position="2365"/>
    </location>
</feature>
<feature type="disulfide bond" evidence="32">
    <location>
        <begin position="2356"/>
        <end position="2362"/>
    </location>
</feature>
<feature type="mutagenesis site" description="No processing between p210 and peptide HD2." evidence="35">
    <original>F</original>
    <variation>A</variation>
    <location>
        <position position="2835"/>
    </location>
</feature>
<feature type="mutagenesis site" description="No effect." evidence="35">
    <original>S</original>
    <variation>A</variation>
    <location>
        <position position="2836"/>
    </location>
</feature>
<feature type="mutagenesis site" description="No effect." evidence="35">
    <original>L</original>
    <variation>A</variation>
    <location>
        <position position="2837"/>
    </location>
</feature>
<feature type="mutagenesis site" description="No effect." evidence="35">
    <original>K</original>
    <variation>A</variation>
    <location>
        <position position="2838"/>
    </location>
</feature>
<feature type="mutagenesis site" description="No effect." evidence="35">
    <original>K</original>
    <variation>N</variation>
    <location>
        <position position="2838"/>
    </location>
</feature>
<feature type="mutagenesis site" description="Partial processing between p210 and peptide HD2." evidence="35">
    <original>G</original>
    <variation>A</variation>
    <location>
        <position position="2839"/>
    </location>
</feature>
<feature type="mutagenesis site" description="No processing between p210 and peptide HD2." evidence="35">
    <original>G</original>
    <variation>N</variation>
    <location>
        <position position="2839"/>
    </location>
</feature>
<feature type="mutagenesis site" description="No processing between p210 and peptide HD2." evidence="35">
    <original>G</original>
    <variation>V</variation>
    <location>
        <position position="2839"/>
    </location>
</feature>
<feature type="mutagenesis site" description="No processing between p210 and peptide HD2." evidence="35">
    <original>G</original>
    <variation>A</variation>
    <location>
        <position position="2840"/>
    </location>
</feature>
<feature type="mutagenesis site" description="No processing between p210 and peptide HD2." evidence="35">
    <original>G</original>
    <variation>N</variation>
    <location>
        <position position="2840"/>
    </location>
</feature>
<feature type="mutagenesis site" description="No processing between p210 and peptide HD2." evidence="35">
    <original>G</original>
    <variation>V</variation>
    <location>
        <position position="2840"/>
    </location>
</feature>
<feature type="mutagenesis site" description="No effect." evidence="35">
    <original>A</original>
    <variation>N</variation>
    <location>
        <position position="2841"/>
    </location>
</feature>
<feature type="mutagenesis site" description="No effect." evidence="35">
    <original>V</original>
    <variation>N</variation>
    <variation>M</variation>
    <location>
        <position position="2842"/>
    </location>
</feature>
<feature type="mutagenesis site" description="No effect." evidence="35">
    <original>V</original>
    <variation>M</variation>
    <location>
        <position position="2846"/>
    </location>
</feature>
<gene>
    <name type="primary">rep</name>
    <name type="ORF">1a-1b</name>
</gene>
<sequence length="7180" mass="803440">MAKMGKYGLGFKWAPEFPWMLPNASEKLGNPERSEEDGFCPSAAQEPKVKGKTLVNHVRVDCSRLPALECCVQSAIIRDIFVDEDPQKVEASTMMALQFGSAVLVKPSKRLSVQAWAKLGVLPKTPAMGLFKRFCLCNTRECVCDAHVAFQLFTVQPDGVCLGNGRFIGWFVPVTAIPEYAKQWLQPWSILLRKGGNKGSVTSGHFRRAVTMPVYDFNVEDACEEVHLNPRGKYSCKAYALLRGYRGVKPILFVDQYGCDYTGCLAKGLEDYGDLTLSEMKELSPVWRDSLDNEVVVAWHVDRDPRAVMRLQTLATVRSIEYVGQPIEDMVDGDVVMREPAHLLAPNAIVKRLPRLVETMLYTDSSVTEFCYKTKLCDCGFITQFGYVDCCGDTCGFRGWVPGNMMDGFPCPGCCKSYMPWELEAQSSGVIPEGGVLFTQSTDTVNRESFKLYGHAVVPFGGAAYWSPYPGMWLPVIWSSVKSYSYLTYTGVVGCKAIVQETDAICRFLYMDYVQHKCGNLEQRAILGLDDVYHRQLLVNRGDYSLLLENVDLFVKRRAEFACKFATCGDGLVPLLLDGLVPRSYYLIKSGQAFTSLMVNFSREVVDMCMDMALLFMHDVKVATKYVKKVTGKVAVRFKALGIAVVRKITEWFDLAVDTAASAAGWLCYQLVNGLFAVANGVITFIQEVPELVKNFVDKFKTFFKVLIDSMSVSILSGLTVVKTASNRVCLAGSKVYEVVQKSLPAYIMPVGCSEATCLVGEIEPAVFEDDVVDVVKAPLTYQGCCKPPSSFEKICIVDKLYMAKCGDQFYPVVVDNDTVGVLDQCWRFPCAGKKVVFNDKPKVKEVPSTRKIKIIFALDATFDSVLSKACSEFEVDKDVTLDELLDVVLDAVESTLSPCKEHGVIGTKVCALLERLVDDYVYLFDEGGEEVIASRMYCSFSAPDEDCVATDVVYADENQDDDADDPVVLVADTQEEDGVAREQVDSADSEICVAHTGGQEMTEPDVVGSQTPIASAEETEVGEACDREGIAEVKATVCADALDACPDQVEAFDIEKVEDSILSELQTELNAPADKTYEDVLAFDAIYSETLSAFYAVPSDETHFKVCGFYSPAIERTNCWLRSTLIVMQSLPLEFKDLGMQKLWLSYKAGYDQCFVDKLVKSAPKSIILPQGGYVADFAYFFLSQCSFKVHANWRCLKCGMELKLQGLDAVFFYGDVVSHMCKCGNSMTLLSADIPYTFDFGVRDDKFCAFYTPRKVFRAACAVDVNDCHSMAVVDGKQIDGKVVTKFNGDKFDFMVGHGMTFSMSPFEIAQLYGSCITPNVCFVKGDVIKVLRRVGAEVIVNPANGRMAHGAGVAGAIAKAAGKAFINETADMVKAQGVCQVGGCYESTGGKLCKKVLNIVGPDARGHGNECYSLLERAYQHINKCDNVVTTLISAGIFSVPTDVSLTYLLGVVTKNVILVSNNQDDFDVIEKCQVTSVAGTKALSFQLAKNLCRDVKFVTNACSSLFSESSFVSSYDVLQEVEALRHDIQLDDDARVFVQANMDCLPTDWRLVNKFDSVDGVRTIKYFECPGEVFVSSQGKKFGYVQNGSFKEASVSQIRALLANKVDVLCTVDGVNFRSCCVAEGEVFGKTLGSVFCDGINVTKVRCSAIHKGKVFFQYSGLSAADLAAVKDAFGFDEPQLLQYYSMLGMCKWPVVVCGNYFAFKQSNNNCYINVACLMLQHLSLKFPKWQWRRPGNEFRSGKPLRFVSLVLAKGSFKFNEPSDSTDFIRVELREADLSGATCDLEFICKCGVKQEQRKGVDAVMHFGTLDKSGLVKGYNIACTCGDKLVHCTQFNVPFLICSNTPEGKKLPDDVVAANIFTGGSVGHYTHVKCKPKYQLYDACNVSKVSEAKGNFTDCLYLKNLKQTFSSVLTTYYLDDVKCVAYKPDLSQYYCESGKYYTKPIIKAQFRTFEKVEGVYTNFKLVGHDIAEKLNAKLGFDCNSPFMEYKITEWPTATGDVVLASDDLYVSRYSGGCVTFGKPVIWRGHEEASLKSLTYFNRPSVVCENKFNVLPVDVSEPTDRRPVPSAVLVTGAASGADASAISTEPGTAKEQKACASDSVEDQIVMEAQKKSSVTTVAVKEVKLNGVKKPVKWNCSVVVNDPTSETKVVKSLSIVDVYDMFLTGCRYVVWTANELSRLINSPTVREYVKWGMSKLIIPANLLLLRDEKQEFVAPKVVKAKAIACYGAVKWFLLYCFSWIKFNTDNKVIYTTEVASKLTFKLCCLAFKNALQTFNWSVVSRGFFLVATVFLLWFNFLYANVILSDFYLPNIGPLPMFVGQIVAWVKTTFGVLTICDFYQVTDLGYRSSFCNGSMVCELCFSGFDMLDNYESINVVQHVVDRRVSFDYISLFKLVVELVIGYSLYTVCFYPLFVLVGMQLLTTWLPEFFMLGTMHWSARLFVFVANMLPAFTLLRFYIVVTAMYKVYCLCRHVMYGCSKPGCLFCYKRNRSVRVKCSTVVGGSLRYYDVMANGGTGFCTKHQWNCLNCNSWKPGNTFITHEAAADLSKELKRPVNPTDSAYYSVIEVKQVGCSMRLFYERDGQRVYDDVSASLFVDMNGLLHSKVKGVPETHVVVVENEADKAGFLNAAVFYAQSLYRPMLMVEKKLITTANTGLSVSRTMFDLYVYSLLRHLDVDRKSLTSFVNAAHNSLKEGVQLEQVMDTFVGCARRKCAIDSDVETKSITKSVMAAVNAGVEVTDESCNNLVPTYVKSDTIVAADLGVLIQNNAKHVQSNVAKAANVACIWSVDAFNQLSADLQHRLRKACVKTGLKIKLTYNKQEANVPILTTPFSLKGGAVFSRVLQWLFVANLICFIVLWALMPTYAVHKSDMQLPLYASFKVIDNGVLRDVSVTDACFANKFNQFDQWYESTFGLVYYRNSKACPVVVAVIDQDIGHTLFNVPTKVLRYGFHVLHFITHAFATDRVQCYTPHMQIPYDNFYASGCVLSSLCTMLAHADGTPHPYCYTEGVMHNASLYSSLVPHVRYNLASSNGYIRFPEVVSEGIVRVVRTRSMTYCRVGLCEEAEEGICFNFNSSWVLNNPYYRAMPGTFCGRNAFDLIHQVLGGLVQPIDFFALTASSVAGAILAIIVVLAFYYLIKLKRAFGDYTSVVVINVIVWCINFLMLFVFQVYPTLSCLYACFYFYTTLYFPSEISVVMHLQWLVMYGAIMPLWFCITYVAVVVSNHALWLFSYCRKIGTDVRSDGTFEEMALTTFMITKESYCKLKNSVSDVAFNRYLSLYNKYRYFSGKMDTATYREAACSQLAKAMETFNHNNGNDVLYQPPTASVTTSFLQSGIVKMVSPTSKVEPCVVSVTYGNMTLNGLWLDDKVYCPRHVICSSADMTDPDYPNLLCRVTSSDFCVMSDRMSLTVMSYQMQGSLLVLTVTLQNPNTPKYSFGVVKPGETFTVLAAYNGRPQGAFHVVMRSSHTIKGSFLCGSCGSVGYVLTGDSVRFVYMHQLELSTGCHTGTDFSGNFYGPYRDAQVVQLPVQDYTQTVNVVAWLYAAILNRCNWFVQSDSCSLEEFNVWAMTNGFSSIKADLVLDALASMTGVTVEQVLAAIKRLHSGFQGKQILGSCVLEDELTPSDVYQQLAGVKLQSKRTRVIKGTCCWILASTFLFCSIISAFVKWTMFMYVTTHMLGVTLCALCFVIFAMLLIKHKHLYLTMYIMPVLCTLFYTNYLVVGYKQSFRGLAYAWLSYFVPAVDYTYMDEVLYGVVLLVAMVFVTMRSINHDVFSTMFLVGRLVSLVSMWYFGANLEEEVLLFLTSLFGTYTWTTMLSLATAKVIAKWLAVNVLYFTDIPQIKLVLLSYLCIGYVCCCYWGVLSLLNSIFRMPLGVYNYKISVQELRYMNANGLRPPRNSFEALMLNFKLLGIGGVPVIEVSQIQSRLTDVKCANVVLLNCLQHLHIASNSKLWQYCSTLHNEILATSDLSVAFDKLAQLLVVLFANPAAVDSKCLASIEEVSDDYVRDNTVLQALQSEFVNMASFVEYELAKKNLDEAKASGSANQQQIKQLEKACNIAKSAYERDRAVARKLERMADLALTNMYKEARINDKKSKVVSALQTMLFSMVRKLDNQALNSILDNAVKGCVPLNAIPPLTSNTLTIIVPDKQVFDQVVDNVYVTYAPNVWHIQSIQDADGAVKQLNEIDVNSTWPLVISANRHNEVSTVVLQNNELMPQKLRTQVVNSGSDMNCNIPTQCYYNTTGTGKIVYAILSDCDGLKYTKIVKEDGNCVVLELDPPCKFSVQDVKGLKIKYLYFVKGCNTLARGWVVGTLSSTVRLQAGTATEYASNSAILSLCAFSVDPKKTYLDYIQQGGVPVTNCVKMLCDHAGTGMAITIKPEATTNQDSYGGASVCIYCRSRVEHPDVDGLCKLRGKFVQVPLGIKDPVSYVLTHDVCQVCGFWRDGSCSCVGTGSQFQSKDTNFLNRVRGTSVNARLVPCASGLDTDVQLRAFDICNANRAGIGLYYKVNCFRFQRVDEEGNKLDKFFVVKRTNLEVYNKEKECYELTKDCGVVAEHEFFTFDVEGSRVPHIVRKDLSKFTMLDLCYALRHFDRNDCSTLKEILLTYAECDESYFQKKDWYDFVENPDIINVYKKLGPIFNRALLNTANFADTLVEAGLVGVLTLDNQDLYGQWYDFGDFVKTVPCCGVAVADSYYSYMMPMLTMCHALDSELFVNGTYREFDLVQYDFTDFKLELFNKYFKHWSMTYHPNTSECEDDRCIIHCANFNILFSMVLPKTCFGPLVRQIFVDGVPFVVSIGYHYKELGVVMNMDVDTHRYRLSLKDLLLYAADPALHVASASALLDLRTCCFSVAAITSGVKFQTVKPGNFNQDFYEFILSKGLLKEGSSVDLKHFFFTQDGNAAITDYNYYKYNLPTMVDIKQLLFVVEVVNKYFEIYEGGCIPATQVIVNNYDKSAGYPFNKFGKARLYYEALSFEEQDEIYAYTKRNVLPTLTQMNLKYAISAKNRARTVAGVSILSTMTGRMFHQKCLKSIAATRGVPVVIGTTKFYGGWDDMLRRLIKDVDSPVLMGWDYPKCDRAMPNILRIVSSLVLARKHDSCCSHTDRFYRLANECAQVLGEIVMCGGCYYVKPGGTSSGDATTAFANSVFNICQAVSANVCSLMACNGHKIEDLSIRELQKRLYSNVYRADHVDPAFVSEYYEFLNKHFSMIILSDDGVVCYNSEFASKGYIANISDFQQVLYYQNNVFMSEAKCWVETDIEKGPHEFCSQHTMLVKMDGDEVYLPYPDPSRILGAGCFVDDLLKTDSVLLIERFVSLAIDAYPLVYHENPEYQNVFRVYLEYIKKLYNDLGNQILDSISVILSTCDGQKFTDETFYKNMYLRSAVMQSVGACVVCSSQTSLRCGSCIRKPLLCCKCAYDHVMSTDHKYVLSVSPYVCNSPGCDVNDVTKLYLGGMSYYCEAHKPQYSFKLVMNGMVFGLYKQSCTGSPYIEDFNKIASCKWTEVDDYVLANECTERLKLFAAETQKATEEAFKQCYASATIREIVSDRELILSWEIGKVRPPLNKNYVFTGYHFTNNGKTVLGEYVFDKSELTNGVYYRATTTYKLSVGDVFILTSHAVSSLSAPTLVPQENYTSVRFASAYSVPETFQNNVPNYQHIGIKRYCTVQGPPGTGKSHLAIGHAVYYCTARVVYTAASHAAVDALCEKAHKFLNINDCARIVPAKLRVDCYDKFNVNDTTRKYVFTTINALPELVTDIIVVDEVSMLTNYELSVINSRVRAKHYVYIGDPAQLPAPRVLLNKGTLEPRYFNSVTKLMCCLGPDIFLGTCYRCPKEIVDTVSALVYNNKLKAKNDNSAMCFKVYYKGQTTHESSSAVNMQQIHLISKLLKANPSWSNAVFISPYNSQNYVAKRVLGLQTQTADSAQGSAYDFVIYSQTAQTAHSVNVNRFNVAITRAKKGILCVMSSMQLIGVFNFTTLTLDKINNPRLQCTTNLFKDCSKSYVGIPPCAFLLAVDDKYKVSGNLAVCLNVADSAVTYSRLISLMGFKLDLTLDGYCKLFITRDEAIKRVRAWVGFDAEGAHATRDSIGTNFPLQLGFSTGIDFVVEATGMFAERDGYVFKKAAARAPPGEQFKHLVPLMSRGQKWDVVRIRIVQMLSDHLVDLADSVVLVTWAASFELTCLRYFAKVGKEVVCSVCNKRATCFNSRTGYYGCWRHSYSCDYLYNPLIVDIQQWGYTGSLTSNHDPICSVHKGAHVASSDAIMTRCLAVHDCFCKSVNWNLEYPIISNEVSVNTSCRLLQRVMFRAAMLCNRYDVCYDIGNPKGLACVKGYDFKFYDASPVVKSVKQFVYKYEAHKDQFLDGLCMFWNCNVDKYPANAVVCRFDTRVLSKLNLPGCNGGSLYVNKHAFHTNPFTRAAFENLKPMPFFYYSDTPCVYMEGMESKQVDYVPLRSATCITRCNLGGAVCLKHAEEYREYLESYNTATTAGFTFWVYKTFDFYNLWNTFTRLQSLENVVYNLVNAGHFDGRAGELPCAVIGEKVIAKIQNEDVVVFKNNTPFPTNVAVELFAERSIRPHPELKLFRSSNIHVCWNHVLWDYAKDSVFCSSTYKVCKYTDLQCIESLNVLFDGRDNGALEAFKKCRNGVYINTTKIKSLSMIKGPQRADLNGVVVEKVGDSDVEFWFAMRRDGDDVIFSRTGSLEPSHYRSPQGNPGGNRVGDLSGNEALARGTIFTQSRFLSSFSPRSEMEKDFMDLDEDVFIAKYSLQDYAFEHVVYGSFNQKIIGGLHLLIGLARRPKKSNLVIQEFVPYDSSIHSYFITDENSGSSESVCTVIDLLLDDFVDIVKSLNLKCVSKVVNVNVDFKDFQFMLWCNEEKVMTFYPRLQAAADWKPGYVMPVLYKYLESPMERVNLWNYGKPITLPTGCMMNVAKYTQLCQYLSTTTLAVPANMRVLHLGAGSDKGVAPGSAVLRQWLPSGSILVDNDMNPFVSDSVASYYGNCITLPFDCQWDLIISDMYDPLTKNIGEYNVSKDGFFTYLCHLIRDKLALGGSVAIKITEFSWNAELYSLMGKFAFWTIFCTNVNASSSEGFLIGINWLNRTRNEIDGKTMHANYLFWRNSTMWNGGAYSLFDMTKFPLKAAGTAVVSLKPDQINDLVLSLIEKGKLLVRDTRKEVFVGDSLVNVK</sequence>
<protein>
    <recommendedName>
        <fullName>Replicase polyprotein 1ab</fullName>
        <shortName>pp1ab</shortName>
    </recommendedName>
    <alternativeName>
        <fullName>ORF1ab polyprotein</fullName>
    </alternativeName>
    <component>
        <recommendedName>
            <fullName>Host translation inhibitor nsp1</fullName>
            <shortName>nsp1</shortName>
        </recommendedName>
        <alternativeName>
            <fullName>p28</fullName>
        </alternativeName>
    </component>
    <component>
        <recommendedName>
            <fullName>Non-structural protein 2</fullName>
            <shortName>nsp2</shortName>
        </recommendedName>
        <alternativeName>
            <fullName>p65</fullName>
        </alternativeName>
    </component>
    <component>
        <recommendedName>
            <fullName>Papain-like proteinase nsp3</fullName>
            <shortName>PL-PRO</shortName>
            <ecNumber>3.4.19.12</ecNumber>
            <ecNumber>3.4.22.-</ecNumber>
        </recommendedName>
        <alternativeName>
            <fullName>Non-structural protein 3</fullName>
            <shortName>nsp3</shortName>
        </alternativeName>
        <alternativeName>
            <fullName>p210</fullName>
        </alternativeName>
    </component>
    <component>
        <recommendedName>
            <fullName>Non-structural protein 4</fullName>
            <shortName>nsp4</shortName>
        </recommendedName>
        <alternativeName>
            <fullName>Peptide HD2</fullName>
        </alternativeName>
        <alternativeName>
            <fullName>p44</fullName>
        </alternativeName>
    </component>
    <component>
        <recommendedName>
            <fullName>3C-like proteinase nsp5</fullName>
            <shortName>3CL-PRO</shortName>
            <shortName>3CLp</shortName>
            <ecNumber>3.4.22.-</ecNumber>
        </recommendedName>
        <alternativeName>
            <fullName>M-PRO</fullName>
        </alternativeName>
        <alternativeName>
            <fullName>nsp5</fullName>
        </alternativeName>
        <alternativeName>
            <fullName>p27</fullName>
        </alternativeName>
    </component>
    <component>
        <recommendedName>
            <fullName>Non-structural protein 6</fullName>
            <shortName>nsp6</shortName>
        </recommendedName>
    </component>
    <component>
        <recommendedName>
            <fullName>Non-structural protein 7</fullName>
            <shortName>nsp7</shortName>
        </recommendedName>
        <alternativeName>
            <fullName>p10</fullName>
        </alternativeName>
    </component>
    <component>
        <recommendedName>
            <fullName>Non-structural protein 8</fullName>
            <shortName>nsp8</shortName>
        </recommendedName>
        <alternativeName>
            <fullName>p22</fullName>
        </alternativeName>
    </component>
    <component>
        <recommendedName>
            <fullName>Viral protein genome-linked nsp9</fullName>
        </recommendedName>
        <alternativeName>
            <fullName>Non-structural protein 9</fullName>
            <shortName>nsp9</shortName>
        </alternativeName>
        <alternativeName>
            <fullName>RNA-capping enzyme subunit nsp9</fullName>
        </alternativeName>
        <alternativeName>
            <fullName>p12</fullName>
        </alternativeName>
    </component>
    <component>
        <recommendedName>
            <fullName>Non-structural protein 10</fullName>
            <shortName>nsp10</shortName>
        </recommendedName>
        <alternativeName>
            <fullName>Growth factor-like peptide</fullName>
            <shortName>GFL</shortName>
        </alternativeName>
        <alternativeName>
            <fullName>p15</fullName>
        </alternativeName>
    </component>
    <component>
        <recommendedName>
            <fullName>RNA-directed RNA polymerase nsp12</fullName>
            <shortName>Pol</shortName>
            <shortName>RdRp</shortName>
            <ecNumber>2.7.7.48</ecNumber>
            <ecNumber>2.7.7.50</ecNumber>
        </recommendedName>
        <alternativeName>
            <fullName>nsp12</fullName>
        </alternativeName>
        <alternativeName>
            <fullName>p100</fullName>
        </alternativeName>
    </component>
    <component>
        <recommendedName>
            <fullName>Helicase nsp13</fullName>
            <shortName>Hel</shortName>
            <ecNumber>3.6.4.12</ecNumber>
            <ecNumber>3.6.4.13</ecNumber>
        </recommendedName>
        <alternativeName>
            <fullName>nsp13</fullName>
        </alternativeName>
        <alternativeName>
            <fullName>p67</fullName>
        </alternativeName>
    </component>
    <component>
        <recommendedName>
            <fullName>Guanine-N7 methyltransferase nsp14</fullName>
            <shortName>ExoN</shortName>
            <ecNumber>2.1.1.56</ecNumber>
            <ecNumber>3.1.13.-</ecNumber>
        </recommendedName>
        <alternativeName>
            <fullName>nsp14</fullName>
        </alternativeName>
    </component>
    <component>
        <recommendedName>
            <fullName>Uridylate-specific endoribonuclease nsp15</fullName>
            <ecNumber>4.6.1.-</ecNumber>
        </recommendedName>
        <alternativeName>
            <fullName>NendoU</fullName>
        </alternativeName>
        <alternativeName>
            <fullName>nsp15</fullName>
        </alternativeName>
        <alternativeName>
            <fullName>p35</fullName>
        </alternativeName>
    </component>
    <component>
        <recommendedName>
            <fullName>2'-O-methyl transferase nsp16</fullName>
            <ecNumber>2.1.1.57</ecNumber>
        </recommendedName>
        <alternativeName>
            <fullName>nsp16</fullName>
        </alternativeName>
    </component>
</protein>
<proteinExistence type="evidence at protein level"/>
<organismHost>
    <name type="scientific">Mus musculus</name>
    <name type="common">Mouse</name>
    <dbReference type="NCBI Taxonomy" id="10090"/>
</organismHost>
<accession>P0C6Y0</accession>
<accession>P19751</accession>
<accession>P29982</accession>
<accession>Q66194</accession>
<accession>Q90045</accession>
<keyword id="KW-1072">Activation of host autophagy by virus</keyword>
<keyword id="KW-0067">ATP-binding</keyword>
<keyword id="KW-1132">Decay of host mRNAs by virus</keyword>
<keyword id="KW-1015">Disulfide bond</keyword>
<keyword id="KW-0255">Endonuclease</keyword>
<keyword id="KW-1262">Eukaryotic host gene expression shutoff by virus</keyword>
<keyword id="KW-1193">Eukaryotic host translation shutoff by virus</keyword>
<keyword id="KW-0269">Exonuclease</keyword>
<keyword id="KW-0347">Helicase</keyword>
<keyword id="KW-1035">Host cytoplasm</keyword>
<keyword id="KW-1190">Host gene expression shutoff by virus</keyword>
<keyword id="KW-1043">Host membrane</keyword>
<keyword id="KW-1192">Host mRNA suppression by virus</keyword>
<keyword id="KW-0945">Host-virus interaction</keyword>
<keyword id="KW-0378">Hydrolase</keyword>
<keyword id="KW-1090">Inhibition of host innate immune response by virus</keyword>
<keyword id="KW-1114">Inhibition of host interferon signaling pathway by virus</keyword>
<keyword id="KW-1095">Inhibition of host ISG15 by virus</keyword>
<keyword id="KW-1100">Inhibition of host NF-kappa-B by virus</keyword>
<keyword id="KW-0922">Interferon antiviral system evasion</keyword>
<keyword id="KW-0456">Lyase</keyword>
<keyword id="KW-0464">Manganese</keyword>
<keyword id="KW-0472">Membrane</keyword>
<keyword id="KW-0479">Metal-binding</keyword>
<keyword id="KW-0489">Methyltransferase</keyword>
<keyword id="KW-1127">Modulation of host ubiquitin pathway by viral deubiquitinase</keyword>
<keyword id="KW-1130">Modulation of host ubiquitin pathway by virus</keyword>
<keyword id="KW-0540">Nuclease</keyword>
<keyword id="KW-0547">Nucleotide-binding</keyword>
<keyword id="KW-0548">Nucleotidyltransferase</keyword>
<keyword id="KW-0645">Protease</keyword>
<keyword id="KW-0677">Repeat</keyword>
<keyword id="KW-0688">Ribosomal frameshifting</keyword>
<keyword id="KW-0694">RNA-binding</keyword>
<keyword id="KW-0696">RNA-directed RNA polymerase</keyword>
<keyword id="KW-0788">Thiol protease</keyword>
<keyword id="KW-0808">Transferase</keyword>
<keyword id="KW-0812">Transmembrane</keyword>
<keyword id="KW-1133">Transmembrane helix</keyword>
<keyword id="KW-0833">Ubl conjugation pathway</keyword>
<keyword id="KW-0899">Viral immunoevasion</keyword>
<keyword id="KW-0693">Viral RNA replication</keyword>
<keyword id="KW-0862">Zinc</keyword>
<keyword id="KW-0863">Zinc-finger</keyword>
<organism>
    <name type="scientific">Murine coronavirus (strain JHM)</name>
    <name type="common">MHV-JHM</name>
    <name type="synonym">Murine hepatitis virus</name>
    <dbReference type="NCBI Taxonomy" id="11144"/>
    <lineage>
        <taxon>Viruses</taxon>
        <taxon>Riboviria</taxon>
        <taxon>Orthornavirae</taxon>
        <taxon>Pisuviricota</taxon>
        <taxon>Pisoniviricetes</taxon>
        <taxon>Nidovirales</taxon>
        <taxon>Cornidovirineae</taxon>
        <taxon>Coronaviridae</taxon>
        <taxon>Orthocoronavirinae</taxon>
        <taxon>Betacoronavirus</taxon>
        <taxon>Embecovirus</taxon>
        <taxon>Murine coronavirus</taxon>
    </lineage>
</organism>